<proteinExistence type="evidence at protein level"/>
<accession>P11166</accession>
<accession>A8K9S6</accession>
<accession>B2R620</accession>
<accession>D3DPX0</accession>
<accession>O75535</accession>
<accession>Q0P512</accession>
<accession>Q147X2</accession>
<evidence type="ECO:0000250" key="1">
    <source>
        <dbReference type="UniProtKB" id="P11167"/>
    </source>
</evidence>
<evidence type="ECO:0000250" key="2">
    <source>
        <dbReference type="UniProtKB" id="P17809"/>
    </source>
</evidence>
<evidence type="ECO:0000250" key="3">
    <source>
        <dbReference type="UniProtKB" id="P46896"/>
    </source>
</evidence>
<evidence type="ECO:0000255" key="4"/>
<evidence type="ECO:0000269" key="5">
    <source>
    </source>
</evidence>
<evidence type="ECO:0000269" key="6">
    <source>
    </source>
</evidence>
<evidence type="ECO:0000269" key="7">
    <source>
    </source>
</evidence>
<evidence type="ECO:0000269" key="8">
    <source>
    </source>
</evidence>
<evidence type="ECO:0000269" key="9">
    <source>
    </source>
</evidence>
<evidence type="ECO:0000269" key="10">
    <source>
    </source>
</evidence>
<evidence type="ECO:0000269" key="11">
    <source>
    </source>
</evidence>
<evidence type="ECO:0000269" key="12">
    <source>
    </source>
</evidence>
<evidence type="ECO:0000269" key="13">
    <source>
    </source>
</evidence>
<evidence type="ECO:0000269" key="14">
    <source>
    </source>
</evidence>
<evidence type="ECO:0000269" key="15">
    <source>
    </source>
</evidence>
<evidence type="ECO:0000269" key="16">
    <source>
    </source>
</evidence>
<evidence type="ECO:0000269" key="17">
    <source>
    </source>
</evidence>
<evidence type="ECO:0000269" key="18">
    <source>
    </source>
</evidence>
<evidence type="ECO:0000269" key="19">
    <source>
    </source>
</evidence>
<evidence type="ECO:0000269" key="20">
    <source>
    </source>
</evidence>
<evidence type="ECO:0000269" key="21">
    <source>
    </source>
</evidence>
<evidence type="ECO:0000269" key="22">
    <source>
    </source>
</evidence>
<evidence type="ECO:0000269" key="23">
    <source>
    </source>
</evidence>
<evidence type="ECO:0000269" key="24">
    <source>
    </source>
</evidence>
<evidence type="ECO:0000269" key="25">
    <source>
    </source>
</evidence>
<evidence type="ECO:0000269" key="26">
    <source>
    </source>
</evidence>
<evidence type="ECO:0000269" key="27">
    <source>
    </source>
</evidence>
<evidence type="ECO:0000269" key="28">
    <source>
    </source>
</evidence>
<evidence type="ECO:0000269" key="29">
    <source>
    </source>
</evidence>
<evidence type="ECO:0000269" key="30">
    <source>
    </source>
</evidence>
<evidence type="ECO:0000269" key="31">
    <source>
    </source>
</evidence>
<evidence type="ECO:0000269" key="32">
    <source>
    </source>
</evidence>
<evidence type="ECO:0000269" key="33">
    <source>
    </source>
</evidence>
<evidence type="ECO:0000269" key="34">
    <source>
    </source>
</evidence>
<evidence type="ECO:0000269" key="35">
    <source>
    </source>
</evidence>
<evidence type="ECO:0000269" key="36">
    <source>
    </source>
</evidence>
<evidence type="ECO:0000269" key="37">
    <source>
    </source>
</evidence>
<evidence type="ECO:0000269" key="38">
    <source>
    </source>
</evidence>
<evidence type="ECO:0000269" key="39">
    <source>
    </source>
</evidence>
<evidence type="ECO:0000269" key="40">
    <source>
    </source>
</evidence>
<evidence type="ECO:0000269" key="41">
    <source>
    </source>
</evidence>
<evidence type="ECO:0000269" key="42">
    <source>
    </source>
</evidence>
<evidence type="ECO:0000303" key="43">
    <source>
    </source>
</evidence>
<evidence type="ECO:0000303" key="44">
    <source>
    </source>
</evidence>
<evidence type="ECO:0000303" key="45">
    <source>
    </source>
</evidence>
<evidence type="ECO:0000303" key="46">
    <source>
    </source>
</evidence>
<evidence type="ECO:0000305" key="47"/>
<evidence type="ECO:0000305" key="48">
    <source>
    </source>
</evidence>
<evidence type="ECO:0000305" key="49">
    <source>
    </source>
</evidence>
<evidence type="ECO:0000312" key="50">
    <source>
        <dbReference type="HGNC" id="HGNC:11005"/>
    </source>
</evidence>
<evidence type="ECO:0007744" key="51">
    <source>
        <dbReference type="PDB" id="4PYP"/>
    </source>
</evidence>
<evidence type="ECO:0007744" key="52">
    <source>
        <dbReference type="PDB" id="5EQG"/>
    </source>
</evidence>
<evidence type="ECO:0007744" key="53">
    <source>
        <dbReference type="PDB" id="5EQH"/>
    </source>
</evidence>
<evidence type="ECO:0007744" key="54">
    <source>
        <dbReference type="PDB" id="5EQI"/>
    </source>
</evidence>
<evidence type="ECO:0007744" key="55">
    <source>
    </source>
</evidence>
<evidence type="ECO:0007744" key="56">
    <source>
    </source>
</evidence>
<evidence type="ECO:0007744" key="57">
    <source>
    </source>
</evidence>
<evidence type="ECO:0007744" key="58">
    <source>
    </source>
</evidence>
<evidence type="ECO:0007744" key="59">
    <source>
    </source>
</evidence>
<evidence type="ECO:0007829" key="60">
    <source>
        <dbReference type="PDB" id="5EQG"/>
    </source>
</evidence>
<evidence type="ECO:0007829" key="61">
    <source>
        <dbReference type="PDB" id="6THA"/>
    </source>
</evidence>
<feature type="chain" id="PRO_0000050338" description="Solute carrier family 2, facilitated glucose transporter member 1">
    <location>
        <begin position="1"/>
        <end position="492"/>
    </location>
</feature>
<feature type="topological domain" description="Cytoplasmic" evidence="35">
    <location>
        <begin position="1"/>
        <end position="11"/>
    </location>
</feature>
<feature type="transmembrane region" description="Helical; Name=1">
    <location>
        <begin position="12"/>
        <end position="33"/>
    </location>
</feature>
<feature type="topological domain" description="Extracellular" evidence="35">
    <location>
        <begin position="34"/>
        <end position="66"/>
    </location>
</feature>
<feature type="transmembrane region" description="Helical; Name=2">
    <location>
        <begin position="67"/>
        <end position="87"/>
    </location>
</feature>
<feature type="topological domain" description="Cytoplasmic" evidence="35">
    <location>
        <begin position="88"/>
        <end position="90"/>
    </location>
</feature>
<feature type="transmembrane region" description="Helical; Name=3">
    <location>
        <begin position="91"/>
        <end position="112"/>
    </location>
</feature>
<feature type="topological domain" description="Extracellular" evidence="35">
    <location>
        <begin position="113"/>
        <end position="120"/>
    </location>
</feature>
<feature type="transmembrane region" description="Helical; Name=4">
    <location>
        <begin position="121"/>
        <end position="144"/>
    </location>
</feature>
<feature type="topological domain" description="Cytoplasmic" evidence="35">
    <location>
        <begin position="145"/>
        <end position="155"/>
    </location>
</feature>
<feature type="transmembrane region" description="Helical; Name=5">
    <location>
        <begin position="156"/>
        <end position="176"/>
    </location>
</feature>
<feature type="topological domain" description="Extracellular" evidence="35">
    <location>
        <begin position="177"/>
        <end position="185"/>
    </location>
</feature>
<feature type="transmembrane region" description="Helical; Name=6">
    <location>
        <begin position="186"/>
        <end position="206"/>
    </location>
</feature>
<feature type="topological domain" description="Cytoplasmic" evidence="35">
    <location>
        <begin position="207"/>
        <end position="271"/>
    </location>
</feature>
<feature type="transmembrane region" description="Helical; Name=7">
    <location>
        <begin position="272"/>
        <end position="293"/>
    </location>
</feature>
<feature type="topological domain" description="Extracellular" evidence="35">
    <location>
        <begin position="294"/>
        <end position="306"/>
    </location>
</feature>
<feature type="transmembrane region" description="Helical; Name=8">
    <location>
        <begin position="307"/>
        <end position="328"/>
    </location>
</feature>
<feature type="topological domain" description="Cytoplasmic" evidence="35">
    <location>
        <begin position="329"/>
        <end position="334"/>
    </location>
</feature>
<feature type="transmembrane region" description="Helical; Name=9">
    <location>
        <begin position="335"/>
        <end position="355"/>
    </location>
</feature>
<feature type="topological domain" description="Extracellular" evidence="35">
    <location>
        <begin position="356"/>
        <end position="365"/>
    </location>
</feature>
<feature type="transmembrane region" description="Helical; Name=10">
    <location>
        <begin position="366"/>
        <end position="388"/>
    </location>
</feature>
<feature type="topological domain" description="Cytoplasmic" evidence="35">
    <location>
        <begin position="389"/>
        <end position="401"/>
    </location>
</feature>
<feature type="transmembrane region" description="Helical; Name=11">
    <location>
        <begin position="402"/>
        <end position="422"/>
    </location>
</feature>
<feature type="topological domain" description="Extracellular" evidence="35">
    <location>
        <begin position="423"/>
        <end position="429"/>
    </location>
</feature>
<feature type="transmembrane region" description="Helical; Name=12">
    <location>
        <begin position="430"/>
        <end position="450"/>
    </location>
</feature>
<feature type="topological domain" description="Cytoplasmic" evidence="35">
    <location>
        <begin position="451"/>
        <end position="492"/>
    </location>
</feature>
<feature type="region of interest" description="Disordered" evidence="49">
    <location>
        <begin position="468"/>
        <end position="492"/>
    </location>
</feature>
<feature type="binding site" evidence="38 54">
    <location>
        <position position="137"/>
    </location>
    <ligand>
        <name>cytochalasin B</name>
        <dbReference type="ChEBI" id="CHEBI:23527"/>
        <note>inhibitor</note>
    </ligand>
</feature>
<feature type="binding site" evidence="48">
    <location>
        <begin position="282"/>
        <end position="283"/>
    </location>
    <ligand>
        <name>D-glucose</name>
        <dbReference type="ChEBI" id="CHEBI:4167"/>
    </ligand>
</feature>
<feature type="binding site" evidence="38 54">
    <location>
        <position position="282"/>
    </location>
    <ligand>
        <name>cytochalasin B</name>
        <dbReference type="ChEBI" id="CHEBI:23527"/>
        <note>inhibitor</note>
    </ligand>
</feature>
<feature type="binding site" evidence="48 51">
    <location>
        <position position="288"/>
    </location>
    <ligand>
        <name>D-glucose</name>
        <dbReference type="ChEBI" id="CHEBI:4167"/>
    </ligand>
</feature>
<feature type="binding site" evidence="48 51">
    <location>
        <position position="317"/>
    </location>
    <ligand>
        <name>D-glucose</name>
        <dbReference type="ChEBI" id="CHEBI:4167"/>
    </ligand>
</feature>
<feature type="binding site" evidence="48 51">
    <location>
        <position position="380"/>
    </location>
    <ligand>
        <name>D-glucose</name>
        <dbReference type="ChEBI" id="CHEBI:4167"/>
    </ligand>
</feature>
<feature type="binding site" evidence="38 54">
    <location>
        <position position="388"/>
    </location>
    <ligand>
        <name>cytochalasin B</name>
        <dbReference type="ChEBI" id="CHEBI:23527"/>
        <note>inhibitor</note>
    </ligand>
</feature>
<feature type="binding site" evidence="38">
    <location>
        <position position="411"/>
    </location>
    <ligand>
        <name>cytochalasin B</name>
        <dbReference type="ChEBI" id="CHEBI:23527"/>
        <note>inhibitor</note>
    </ligand>
</feature>
<feature type="site" description="Not glycosylated" evidence="42">
    <location>
        <position position="411"/>
    </location>
</feature>
<feature type="modified residue" description="N-acetylmethionine" evidence="57">
    <location>
        <position position="1"/>
    </location>
</feature>
<feature type="modified residue" description="Phosphoserine; by PKC/PRKCB" evidence="37">
    <location>
        <position position="226"/>
    </location>
</feature>
<feature type="modified residue" description="Phosphoserine" evidence="58">
    <location>
        <position position="465"/>
    </location>
</feature>
<feature type="modified residue" description="Phosphothreonine" evidence="55">
    <location>
        <position position="478"/>
    </location>
</feature>
<feature type="modified residue" description="Phosphoserine" evidence="56 58 59">
    <location>
        <position position="490"/>
    </location>
</feature>
<feature type="glycosylation site" description="N-linked (GlcNAc...) asparagine" evidence="17 42">
    <location>
        <position position="45"/>
    </location>
</feature>
<feature type="sequence variant" id="VAR_054755" description="In GLUT1DS2; dbSNP:rs80359812." evidence="11">
    <original>N</original>
    <variation>I</variation>
    <location>
        <position position="34"/>
    </location>
</feature>
<feature type="sequence variant" id="VAR_054756" description="In GLUT1DS1; 55% of wild-type glucose uptake activity; dbSNP:rs80359812." evidence="12">
    <original>N</original>
    <variation>S</variation>
    <location>
        <position position="34"/>
    </location>
</feature>
<feature type="sequence variant" id="VAR_065206" description="In GLUT1DS1." evidence="22">
    <original>N</original>
    <variation>Y</variation>
    <location>
        <position position="34"/>
    </location>
</feature>
<feature type="sequence variant" id="VAR_076226" description="In EIG12; uncertain significance; dbSNP:rs201815571." evidence="33">
    <original>R</original>
    <variation>H</variation>
    <location>
        <position position="51"/>
    </location>
</feature>
<feature type="sequence variant" id="VAR_076227" description="In EIG12; uncertain significance; decreased glucose transport; dbSNP:rs142986731." evidence="33">
    <original>T</original>
    <variation>M</variation>
    <location>
        <position position="60"/>
    </location>
</feature>
<feature type="sequence variant" id="VAR_013283" description="In GLUT1DS1; dbSNP:rs80359813." evidence="7">
    <original>S</original>
    <variation>F</variation>
    <location>
        <position position="66"/>
    </location>
</feature>
<feature type="sequence variant" id="VAR_076228" description="In EIG12; decreased glucose transport; dbSNP:rs1187210267." evidence="33">
    <original>M</original>
    <variation>T</variation>
    <location>
        <position position="77"/>
    </location>
</feature>
<feature type="sequence variant" id="VAR_013182" description="In GLUT1DS1; significantly decreases the transport of 3-O-methyl-D-glucose; dbSNP:rs80359814." evidence="8 24">
    <original>G</original>
    <variation>D</variation>
    <location>
        <position position="91"/>
    </location>
</feature>
<feature type="sequence variant" id="VAR_069077" description="In GLUT1DS2; dbSNP:rs202060209." evidence="19">
    <original>R</original>
    <variation>W</variation>
    <location>
        <position position="92"/>
    </location>
</feature>
<feature type="sequence variant" id="VAR_065207" description="In GLUT1DS2; dbSNP:rs267607061." evidence="22">
    <original>R</original>
    <variation>W</variation>
    <location>
        <position position="93"/>
    </location>
</feature>
<feature type="sequence variant" id="VAR_065208" description="In GLUT1DS2; dbSNP:rs267607060." evidence="24">
    <original>S</original>
    <variation>I</variation>
    <location>
        <position position="95"/>
    </location>
</feature>
<feature type="sequence variant" id="VAR_065209" description="In GLUT1DS1; dbSNP:rs753161833." evidence="22">
    <original>M</original>
    <variation>V</variation>
    <location>
        <position position="96"/>
    </location>
</feature>
<feature type="sequence variant" id="VAR_054757" description="In GLUT1DS1, GLUT1DS2 and DYT9; reduced transporter activity; dbSNP:rs80359818." evidence="10 20 29">
    <original>R</original>
    <variation>C</variation>
    <location>
        <position position="126"/>
    </location>
</feature>
<feature type="sequence variant" id="VAR_013183" description="In GLUT1DS1; significantly decreases the transport of 3-O-methyl-D-glucose and dehydroascorbic acid; 57% of wild-type glucose uptake activity; dbSNP:rs80359816." evidence="9 10 12 24">
    <original>R</original>
    <variation>H</variation>
    <location>
        <position position="126"/>
    </location>
</feature>
<feature type="sequence variant" id="VAR_013184" description="In GLUT1DS1; dbSNP:rs80359816." evidence="7">
    <original>R</original>
    <variation>L</variation>
    <location>
        <position position="126"/>
    </location>
</feature>
<feature type="sequence variant" id="VAR_054758" description="In GLUT1DS1; 75% of wild-type glucose uptake activity; dbSNP:rs80359819." evidence="12 22">
    <original>G</original>
    <variation>S</variation>
    <location>
        <position position="130"/>
    </location>
</feature>
<feature type="sequence variant" id="VAR_013284" description="In GLUT1DS1; dbSNP:rs80359820." evidence="7 10">
    <original>E</original>
    <variation>K</variation>
    <location>
        <position position="146"/>
    </location>
</feature>
<feature type="sequence variant" id="VAR_076229" description="In EIG12; uncertain significance." evidence="33">
    <original>P</original>
    <variation>A</variation>
    <location>
        <position position="149"/>
    </location>
</feature>
<feature type="sequence variant" id="VAR_054759" description="In GLUT1DS1; 44% of wild-type glucose uptake activity; dbSNP:rs1643479461." evidence="10 12">
    <original>R</original>
    <variation>C</variation>
    <location>
        <position position="153"/>
    </location>
</feature>
<feature type="sequence variant" id="VAR_065210" description="In GLUT1DS2; dbSNP:rs794727642." evidence="22">
    <original>R</original>
    <variation>H</variation>
    <location>
        <position position="153"/>
    </location>
</feature>
<feature type="sequence variant" id="VAR_065211" description="In GLUT1DS1." evidence="22">
    <original>A</original>
    <variation>V</variation>
    <location>
        <position position="155"/>
    </location>
</feature>
<feature type="sequence variant" id="VAR_065212" description="In GLUT1DS2; dbSNP:rs1057520545." evidence="25">
    <original>V</original>
    <variation>I</variation>
    <location>
        <position position="165"/>
    </location>
</feature>
<feature type="sequence variant" id="VAR_054760" description="In GLUT1DS1; 48% of wild-type glucose uptake activity; dbSNP:rs80359832." evidence="12">
    <location>
        <position position="169"/>
    </location>
</feature>
<feature type="sequence variant" id="VAR_065213" description="In GLUT1DS1 and DYT9; dbSNP:rs387907312." evidence="22 29">
    <original>R</original>
    <variation>C</variation>
    <location>
        <position position="212"/>
    </location>
</feature>
<feature type="sequence variant" id="VAR_065214" description="In GLUT1DS1; dbSNP:rs886039517." evidence="22">
    <original>R</original>
    <variation>H</variation>
    <location>
        <position position="212"/>
    </location>
</feature>
<feature type="sequence variant" id="VAR_076230" description="In EIG12; decreased glucose transport." evidence="33">
    <original>R</original>
    <variation>S</variation>
    <location>
        <position position="218"/>
    </location>
</feature>
<feature type="sequence variant" id="VAR_065215" description="In EIG12; mild phenotype; reduced transporter activity; impaired phosphorylation by PKC; dbSNP:rs397514564." evidence="20 24 37">
    <original>R</original>
    <variation>P</variation>
    <location>
        <position position="223"/>
    </location>
</feature>
<feature type="sequence variant" id="VAR_076231" description="In EIG12; uncertain significance; no effect on glucose transport; impaired phosphorylation by PKC; dbSNP:rs397514564." evidence="33 37">
    <original>R</original>
    <variation>Q</variation>
    <location>
        <position position="223"/>
    </location>
</feature>
<feature type="sequence variant" id="VAR_065216" description="In GLUT1DS1; impaired phosphorylation by PKC; dbSNP:rs796053248." evidence="22 37">
    <original>R</original>
    <variation>W</variation>
    <location>
        <position position="223"/>
    </location>
</feature>
<feature type="sequence variant" id="VAR_069078" description="In EIG12; the mutant protein is expressed at the cell surface but has mildly decreased glucose uptake (70%) compared to wild-type; dbSNP:rs387907313." evidence="30">
    <original>R</original>
    <variation>C</variation>
    <location>
        <position position="232"/>
    </location>
</feature>
<feature type="sequence variant" id="VAR_076232" description="In EIG12; decreased glucose transport; dbSNP:rs2124449030." evidence="33">
    <original>E</original>
    <variation>V</variation>
    <location>
        <position position="243"/>
    </location>
</feature>
<feature type="sequence variant" id="VAR_013185" description="In GLUT1DS1; dbSNP:rs121909738." evidence="7">
    <original>K</original>
    <variation>E</variation>
    <location>
        <position position="256"/>
    </location>
</feature>
<feature type="sequence variant" id="VAR_054761" description="In GLUT1DS2; the mutation decreases glucose transport but does not affect cation permeability; dbSNP:rs121909740." evidence="16">
    <original>A</original>
    <variation>T</variation>
    <location>
        <position position="275"/>
    </location>
</feature>
<feature type="sequence variant" id="VAR_054762" description="In GLUT1DS2; accompanied by hemolytic anemia and altered erythrocyte ion concentrations; the mutation decreases glucose transport and causes a cation leak that alteres intracellular concentrations of sodium potassium and calcium." evidence="16">
    <location>
        <begin position="282"/>
        <end position="285"/>
    </location>
</feature>
<feature type="sequence variant" id="VAR_076233" description="In SDCHCN; no effect on protein abundance; no effect on localization to the plasma membrane; loss of D-glucose transporter activity; increased cation leakage; dbSNP:rs864309514." evidence="28 31">
    <original>G</original>
    <variation>D</variation>
    <location>
        <position position="286"/>
    </location>
</feature>
<feature type="sequence variant" id="VAR_069079" description="In GLUT1DS1." evidence="21">
    <original>Y</original>
    <variation>YY</variation>
    <location>
        <position position="292"/>
    </location>
</feature>
<feature type="sequence variant" id="VAR_065784" description="In GLUT1DS2." evidence="26">
    <original>S</original>
    <variation>P</variation>
    <location>
        <position position="294"/>
    </location>
</feature>
<feature type="sequence variant" id="VAR_054763" description="In GLUT1DS1; 75% of wild-type glucose uptake activity; dbSNP:rs80359823." evidence="12 22">
    <original>T</original>
    <variation>M</variation>
    <location>
        <position position="295"/>
    </location>
</feature>
<feature type="sequence variant" id="VAR_065217" description="Found in a patient with GLUT1 deficiency syndrome; dbSNP:rs1205631854." evidence="22">
    <original>V</original>
    <variation>L</variation>
    <location>
        <position position="303"/>
    </location>
</feature>
<feature type="sequence variant" id="VAR_013285" description="In GLUT1DS1; dbSNP:rs80359824." evidence="5">
    <original>T</original>
    <variation>I</variation>
    <location>
        <position position="310"/>
    </location>
</feature>
<feature type="sequence variant" id="VAR_054764" description="In GLUT1DS2; the mutation decreases glucose transport but does not affect cation permeability; dbSNP:rs121909739." evidence="16 24">
    <original>G</original>
    <variation>S</variation>
    <location>
        <position position="314"/>
    </location>
</feature>
<feature type="sequence variant" id="VAR_065218" description="In GLUT1DS2." evidence="27">
    <original>N</original>
    <variation>T</variation>
    <location>
        <position position="317"/>
    </location>
</feature>
<feature type="sequence variant" id="VAR_065219" description="In GLUT1DS2; mild phenotype; reduced transporter activity; dbSNP:rs796053253." evidence="20 24">
    <original>S</original>
    <variation>L</variation>
    <location>
        <position position="324"/>
    </location>
</feature>
<feature type="sequence variant" id="VAR_065220" description="In GLUT1DS1; stabilizes the inward-open conformation." evidence="22">
    <original>E</original>
    <variation>Q</variation>
    <location>
        <position position="329"/>
    </location>
</feature>
<feature type="sequence variant" id="VAR_065221" description="In GLUT1DS1 and GLUT1DS2; dbSNP:rs1553155986." evidence="19 22">
    <original>R</original>
    <variation>Q</variation>
    <location>
        <position position="333"/>
    </location>
</feature>
<feature type="sequence variant" id="VAR_013286" description="In GLUT1DS1; 43% of wild-type glucose uptake activity; dbSNP:rs80359825." evidence="7 10 12">
    <original>R</original>
    <variation>W</variation>
    <location>
        <position position="333"/>
    </location>
</feature>
<feature type="sequence variant" id="VAR_065222" description="In GLUT1DS1." evidence="22">
    <original>G</original>
    <variation>D</variation>
    <location>
        <position position="382"/>
    </location>
</feature>
<feature type="sequence variant" id="VAR_065223" description="In GLUT1DS1." evidence="22">
    <original>A</original>
    <variation>D</variation>
    <location>
        <position position="405"/>
    </location>
</feature>
<feature type="sequence variant" id="VAR_076234" description="In EIG12; decreased glucose transport; dbSNP:rs398123069." evidence="33">
    <original>N</original>
    <variation>S</variation>
    <location>
        <position position="411"/>
    </location>
</feature>
<feature type="sequence variant" id="VAR_076235" description="In SDCHCN; no effect on protein abundance; no effect on localization to the plasma membrane; loss of D-glucose transporter activity; increased cation leakage." evidence="28 31">
    <location>
        <position position="435"/>
    </location>
</feature>
<feature type="sequence variant" id="VAR_076236" description="In EIG12; decreased glucose transport; dbSNP:rs13306758." evidence="33">
    <original>R</original>
    <variation>W</variation>
    <location>
        <position position="458"/>
    </location>
</feature>
<feature type="sequence variant" id="VAR_069080" description="In GLUT1DS1; dbSNP:rs267607059." evidence="23">
    <original>R</original>
    <variation>W</variation>
    <location>
        <position position="468"/>
    </location>
</feature>
<feature type="sequence variant" id="VAR_065224" description="In GLUT1DS1; creates a dileucine internalization motif that promotes recruitment of clathrin and mislocalization of the protein to endocytic compartments; dbSNP:rs1159593580." evidence="22 39">
    <original>P</original>
    <variation>L</variation>
    <location>
        <position position="485"/>
    </location>
</feature>
<feature type="mutagenesis site" description="Loss of glycosylation site." evidence="35">
    <original>N</original>
    <variation>T</variation>
    <location>
        <position position="45"/>
    </location>
</feature>
<feature type="mutagenesis site" description="Strongly decreases glucose transport." evidence="14">
    <original>I</original>
    <variation>C</variation>
    <location>
        <position position="192"/>
    </location>
</feature>
<feature type="mutagenesis site" description="Abolishes glucose transport." evidence="14">
    <original>L</original>
    <variation>C</variation>
    <location>
        <position position="204"/>
    </location>
</feature>
<feature type="mutagenesis site" description="Abolishes glucose transport." evidence="14">
    <original>P</original>
    <variation>C</variation>
    <location>
        <position position="205"/>
    </location>
</feature>
<feature type="mutagenesis site" description="Abolishes phosphorylation by PKA, leading to impaired response to TPA." evidence="37">
    <original>S</original>
    <variation>A</variation>
    <location>
        <position position="226"/>
    </location>
</feature>
<feature type="mutagenesis site" description="Strongly decreases glucose transport." evidence="18">
    <original>G</original>
    <variation>C</variation>
    <location>
        <position position="340"/>
    </location>
</feature>
<feature type="sequence conflict" description="In Ref. 2; BAF85480." evidence="47" ref="2">
    <location>
        <begin position="25"/>
        <end position="26"/>
    </location>
</feature>
<feature type="sequence conflict" description="In Ref. 2; BAF85480." evidence="47" ref="2">
    <original>S</original>
    <variation>L</variation>
    <location>
        <position position="95"/>
    </location>
</feature>
<feature type="sequence conflict" description="In Ref. 1; AAA52571." evidence="47" ref="1">
    <original>L</original>
    <variation>F</variation>
    <location>
        <position position="152"/>
    </location>
</feature>
<feature type="sequence conflict" description="In Ref. 4; AAI21805." evidence="47" ref="4">
    <original>W</original>
    <variation>R</variation>
    <location>
        <position position="363"/>
    </location>
</feature>
<feature type="helix" evidence="61">
    <location>
        <begin position="11"/>
        <end position="31"/>
    </location>
</feature>
<feature type="strand" evidence="61">
    <location>
        <begin position="32"/>
        <end position="34"/>
    </location>
</feature>
<feature type="helix" evidence="61">
    <location>
        <begin position="37"/>
        <end position="52"/>
    </location>
</feature>
<feature type="helix" evidence="61">
    <location>
        <begin position="58"/>
        <end position="81"/>
    </location>
</feature>
<feature type="helix" evidence="61">
    <location>
        <begin position="83"/>
        <end position="90"/>
    </location>
</feature>
<feature type="helix" evidence="61">
    <location>
        <begin position="92"/>
        <end position="111"/>
    </location>
</feature>
<feature type="helix" evidence="61">
    <location>
        <begin position="113"/>
        <end position="116"/>
    </location>
</feature>
<feature type="helix" evidence="61">
    <location>
        <begin position="119"/>
        <end position="147"/>
    </location>
</feature>
<feature type="turn" evidence="61">
    <location>
        <begin position="150"/>
        <end position="152"/>
    </location>
</feature>
<feature type="helix" evidence="61">
    <location>
        <begin position="153"/>
        <end position="157"/>
    </location>
</feature>
<feature type="helix" evidence="61">
    <location>
        <begin position="159"/>
        <end position="173"/>
    </location>
</feature>
<feature type="turn" evidence="61">
    <location>
        <begin position="177"/>
        <end position="180"/>
    </location>
</feature>
<feature type="turn" evidence="61">
    <location>
        <begin position="183"/>
        <end position="185"/>
    </location>
</feature>
<feature type="helix" evidence="61">
    <location>
        <begin position="186"/>
        <end position="191"/>
    </location>
</feature>
<feature type="helix" evidence="61">
    <location>
        <begin position="194"/>
        <end position="203"/>
    </location>
</feature>
<feature type="helix" evidence="61">
    <location>
        <begin position="204"/>
        <end position="206"/>
    </location>
</feature>
<feature type="helix" evidence="61">
    <location>
        <begin position="211"/>
        <end position="215"/>
    </location>
</feature>
<feature type="turn" evidence="60">
    <location>
        <begin position="216"/>
        <end position="218"/>
    </location>
</feature>
<feature type="helix" evidence="61">
    <location>
        <begin position="221"/>
        <end position="231"/>
    </location>
</feature>
<feature type="helix" evidence="61">
    <location>
        <begin position="238"/>
        <end position="252"/>
    </location>
</feature>
<feature type="helix" evidence="61">
    <location>
        <begin position="259"/>
        <end position="264"/>
    </location>
</feature>
<feature type="helix" evidence="61">
    <location>
        <begin position="266"/>
        <end position="283"/>
    </location>
</feature>
<feature type="turn" evidence="61">
    <location>
        <begin position="284"/>
        <end position="286"/>
    </location>
</feature>
<feature type="helix" evidence="61">
    <location>
        <begin position="287"/>
        <end position="300"/>
    </location>
</feature>
<feature type="helix" evidence="61">
    <location>
        <begin position="306"/>
        <end position="327"/>
    </location>
</feature>
<feature type="helix" evidence="61">
    <location>
        <begin position="328"/>
        <end position="330"/>
    </location>
</feature>
<feature type="helix" evidence="61">
    <location>
        <begin position="333"/>
        <end position="356"/>
    </location>
</feature>
<feature type="turn" evidence="61">
    <location>
        <begin position="357"/>
        <end position="360"/>
    </location>
</feature>
<feature type="helix" evidence="61">
    <location>
        <begin position="364"/>
        <end position="381"/>
    </location>
</feature>
<feature type="turn" evidence="61">
    <location>
        <begin position="382"/>
        <end position="385"/>
    </location>
</feature>
<feature type="helix" evidence="61">
    <location>
        <begin position="386"/>
        <end position="394"/>
    </location>
</feature>
<feature type="turn" evidence="61">
    <location>
        <begin position="397"/>
        <end position="399"/>
    </location>
</feature>
<feature type="helix" evidence="61">
    <location>
        <begin position="400"/>
        <end position="429"/>
    </location>
</feature>
<feature type="helix" evidence="61">
    <location>
        <begin position="430"/>
        <end position="432"/>
    </location>
</feature>
<feature type="helix" evidence="61">
    <location>
        <begin position="433"/>
        <end position="450"/>
    </location>
</feature>
<gene>
    <name evidence="50" type="primary">SLC2A1</name>
    <name evidence="43 44" type="synonym">GLUT1</name>
</gene>
<name>GTR1_HUMAN</name>
<reference key="1">
    <citation type="journal article" date="1985" name="Science">
        <title>Sequence and structure of a human glucose transporter.</title>
        <authorList>
            <person name="Mueckler M."/>
            <person name="Caruso C."/>
            <person name="Baldwin S.A."/>
            <person name="Panico M."/>
            <person name="Blench I."/>
            <person name="Morris H.R."/>
            <person name="Allard W.J."/>
            <person name="Lienhard G.E."/>
            <person name="Lodish H.F."/>
        </authorList>
    </citation>
    <scope>NUCLEOTIDE SEQUENCE [MRNA]</scope>
    <scope>PARTIAL PROTEIN SEQUENCE</scope>
    <scope>GLYCOSYLATION AT ASN-45</scope>
    <scope>LACK OF GLYCOSYLATION AT ASN-411</scope>
    <scope>IDENTIFICATION BY MASS SPECTROMETRY</scope>
</reference>
<reference key="2">
    <citation type="journal article" date="2004" name="Nat. Genet.">
        <title>Complete sequencing and characterization of 21,243 full-length human cDNAs.</title>
        <authorList>
            <person name="Ota T."/>
            <person name="Suzuki Y."/>
            <person name="Nishikawa T."/>
            <person name="Otsuki T."/>
            <person name="Sugiyama T."/>
            <person name="Irie R."/>
            <person name="Wakamatsu A."/>
            <person name="Hayashi K."/>
            <person name="Sato H."/>
            <person name="Nagai K."/>
            <person name="Kimura K."/>
            <person name="Makita H."/>
            <person name="Sekine M."/>
            <person name="Obayashi M."/>
            <person name="Nishi T."/>
            <person name="Shibahara T."/>
            <person name="Tanaka T."/>
            <person name="Ishii S."/>
            <person name="Yamamoto J."/>
            <person name="Saito K."/>
            <person name="Kawai Y."/>
            <person name="Isono Y."/>
            <person name="Nakamura Y."/>
            <person name="Nagahari K."/>
            <person name="Murakami K."/>
            <person name="Yasuda T."/>
            <person name="Iwayanagi T."/>
            <person name="Wagatsuma M."/>
            <person name="Shiratori A."/>
            <person name="Sudo H."/>
            <person name="Hosoiri T."/>
            <person name="Kaku Y."/>
            <person name="Kodaira H."/>
            <person name="Kondo H."/>
            <person name="Sugawara M."/>
            <person name="Takahashi M."/>
            <person name="Kanda K."/>
            <person name="Yokoi T."/>
            <person name="Furuya T."/>
            <person name="Kikkawa E."/>
            <person name="Omura Y."/>
            <person name="Abe K."/>
            <person name="Kamihara K."/>
            <person name="Katsuta N."/>
            <person name="Sato K."/>
            <person name="Tanikawa M."/>
            <person name="Yamazaki M."/>
            <person name="Ninomiya K."/>
            <person name="Ishibashi T."/>
            <person name="Yamashita H."/>
            <person name="Murakawa K."/>
            <person name="Fujimori K."/>
            <person name="Tanai H."/>
            <person name="Kimata M."/>
            <person name="Watanabe M."/>
            <person name="Hiraoka S."/>
            <person name="Chiba Y."/>
            <person name="Ishida S."/>
            <person name="Ono Y."/>
            <person name="Takiguchi S."/>
            <person name="Watanabe S."/>
            <person name="Yosida M."/>
            <person name="Hotuta T."/>
            <person name="Kusano J."/>
            <person name="Kanehori K."/>
            <person name="Takahashi-Fujii A."/>
            <person name="Hara H."/>
            <person name="Tanase T.-O."/>
            <person name="Nomura Y."/>
            <person name="Togiya S."/>
            <person name="Komai F."/>
            <person name="Hara R."/>
            <person name="Takeuchi K."/>
            <person name="Arita M."/>
            <person name="Imose N."/>
            <person name="Musashino K."/>
            <person name="Yuuki H."/>
            <person name="Oshima A."/>
            <person name="Sasaki N."/>
            <person name="Aotsuka S."/>
            <person name="Yoshikawa Y."/>
            <person name="Matsunawa H."/>
            <person name="Ichihara T."/>
            <person name="Shiohata N."/>
            <person name="Sano S."/>
            <person name="Moriya S."/>
            <person name="Momiyama H."/>
            <person name="Satoh N."/>
            <person name="Takami S."/>
            <person name="Terashima Y."/>
            <person name="Suzuki O."/>
            <person name="Nakagawa S."/>
            <person name="Senoh A."/>
            <person name="Mizoguchi H."/>
            <person name="Goto Y."/>
            <person name="Shimizu F."/>
            <person name="Wakebe H."/>
            <person name="Hishigaki H."/>
            <person name="Watanabe T."/>
            <person name="Sugiyama A."/>
            <person name="Takemoto M."/>
            <person name="Kawakami B."/>
            <person name="Yamazaki M."/>
            <person name="Watanabe K."/>
            <person name="Kumagai A."/>
            <person name="Itakura S."/>
            <person name="Fukuzumi Y."/>
            <person name="Fujimori Y."/>
            <person name="Komiyama M."/>
            <person name="Tashiro H."/>
            <person name="Tanigami A."/>
            <person name="Fujiwara T."/>
            <person name="Ono T."/>
            <person name="Yamada K."/>
            <person name="Fujii Y."/>
            <person name="Ozaki K."/>
            <person name="Hirao M."/>
            <person name="Ohmori Y."/>
            <person name="Kawabata A."/>
            <person name="Hikiji T."/>
            <person name="Kobatake N."/>
            <person name="Inagaki H."/>
            <person name="Ikema Y."/>
            <person name="Okamoto S."/>
            <person name="Okitani R."/>
            <person name="Kawakami T."/>
            <person name="Noguchi S."/>
            <person name="Itoh T."/>
            <person name="Shigeta K."/>
            <person name="Senba T."/>
            <person name="Matsumura K."/>
            <person name="Nakajima Y."/>
            <person name="Mizuno T."/>
            <person name="Morinaga M."/>
            <person name="Sasaki M."/>
            <person name="Togashi T."/>
            <person name="Oyama M."/>
            <person name="Hata H."/>
            <person name="Watanabe M."/>
            <person name="Komatsu T."/>
            <person name="Mizushima-Sugano J."/>
            <person name="Satoh T."/>
            <person name="Shirai Y."/>
            <person name="Takahashi Y."/>
            <person name="Nakagawa K."/>
            <person name="Okumura K."/>
            <person name="Nagase T."/>
            <person name="Nomura N."/>
            <person name="Kikuchi H."/>
            <person name="Masuho Y."/>
            <person name="Yamashita R."/>
            <person name="Nakai K."/>
            <person name="Yada T."/>
            <person name="Nakamura Y."/>
            <person name="Ohara O."/>
            <person name="Isogai T."/>
            <person name="Sugano S."/>
        </authorList>
    </citation>
    <scope>NUCLEOTIDE SEQUENCE [LARGE SCALE MRNA]</scope>
    <source>
        <tissue>Brain</tissue>
        <tissue>Trachea</tissue>
    </source>
</reference>
<reference key="3">
    <citation type="submission" date="2005-09" db="EMBL/GenBank/DDBJ databases">
        <authorList>
            <person name="Mural R.J."/>
            <person name="Istrail S."/>
            <person name="Sutton G.G."/>
            <person name="Florea L."/>
            <person name="Halpern A.L."/>
            <person name="Mobarry C.M."/>
            <person name="Lippert R."/>
            <person name="Walenz B."/>
            <person name="Shatkay H."/>
            <person name="Dew I."/>
            <person name="Miller J.R."/>
            <person name="Flanigan M.J."/>
            <person name="Edwards N.J."/>
            <person name="Bolanos R."/>
            <person name="Fasulo D."/>
            <person name="Halldorsson B.V."/>
            <person name="Hannenhalli S."/>
            <person name="Turner R."/>
            <person name="Yooseph S."/>
            <person name="Lu F."/>
            <person name="Nusskern D.R."/>
            <person name="Shue B.C."/>
            <person name="Zheng X.H."/>
            <person name="Zhong F."/>
            <person name="Delcher A.L."/>
            <person name="Huson D.H."/>
            <person name="Kravitz S.A."/>
            <person name="Mouchard L."/>
            <person name="Reinert K."/>
            <person name="Remington K.A."/>
            <person name="Clark A.G."/>
            <person name="Waterman M.S."/>
            <person name="Eichler E.E."/>
            <person name="Adams M.D."/>
            <person name="Hunkapiller M.W."/>
            <person name="Myers E.W."/>
            <person name="Venter J.C."/>
        </authorList>
    </citation>
    <scope>NUCLEOTIDE SEQUENCE [LARGE SCALE GENOMIC DNA]</scope>
</reference>
<reference key="4">
    <citation type="journal article" date="2004" name="Genome Res.">
        <title>The status, quality, and expansion of the NIH full-length cDNA project: the Mammalian Gene Collection (MGC).</title>
        <authorList>
            <consortium name="The MGC Project Team"/>
        </authorList>
    </citation>
    <scope>NUCLEOTIDE SEQUENCE [LARGE SCALE MRNA]</scope>
</reference>
<reference key="5">
    <citation type="journal article" date="1988" name="Diabetes">
        <title>Characterization and expression of human HepG2/erythrocyte glucose-transporter gene.</title>
        <authorList>
            <person name="Fukumoto H."/>
            <person name="Seino S."/>
            <person name="Imura H."/>
            <person name="Seino Y."/>
            <person name="Bell G.I."/>
        </authorList>
    </citation>
    <scope>NUCLEOTIDE SEQUENCE [GENOMIC DNA] OF 1-6</scope>
</reference>
<reference key="6">
    <citation type="submission" date="1998-06" db="EMBL/GenBank/DDBJ databases">
        <authorList>
            <person name="Yu W."/>
            <person name="Gibbs R.A."/>
        </authorList>
    </citation>
    <scope>NUCLEOTIDE SEQUENCE [LARGE SCALE MRNA] OF 150-492</scope>
    <source>
        <tissue>Brain</tissue>
    </source>
</reference>
<reference key="7">
    <citation type="submission" date="2001-05" db="EMBL/GenBank/DDBJ databases">
        <title>Molecular characterization and cloning of glucose transporters in human articular chondrocytes.</title>
        <authorList>
            <person name="Neama G."/>
            <person name="Richardson S."/>
            <person name="Bell S."/>
            <person name="Carter S."/>
            <person name="Mobasheri A."/>
        </authorList>
    </citation>
    <scope>NUCLEOTIDE SEQUENCE [MRNA] OF 294-423</scope>
    <source>
        <tissue>Articular cartilage</tissue>
    </source>
</reference>
<reference key="8">
    <citation type="journal article" date="2000" name="Proc. Natl. Acad. Sci. U.S.A.">
        <title>Hexose permeation pathways in Plasmodium falciparum-infected erythrocytes.</title>
        <authorList>
            <person name="Woodrow C.J."/>
            <person name="Burchmore R.J."/>
            <person name="Krishna S."/>
        </authorList>
    </citation>
    <scope>FUNCTION</scope>
    <scope>TRANSPORTER ACTIVITY</scope>
    <scope>BIOPHYSICOCHEMICAL PROPERTIES</scope>
</reference>
<reference key="9">
    <citation type="journal article" date="2006" name="J. Proteome Res.">
        <title>Proteomic and bioinformatic characterization of the biogenesis and function of melanosomes.</title>
        <authorList>
            <person name="Chi A."/>
            <person name="Valencia J.C."/>
            <person name="Hu Z.-Z."/>
            <person name="Watabe H."/>
            <person name="Yamaguchi H."/>
            <person name="Mangini N.J."/>
            <person name="Huang H."/>
            <person name="Canfield V.A."/>
            <person name="Cheng K.C."/>
            <person name="Yang F."/>
            <person name="Abe R."/>
            <person name="Yamagishi S."/>
            <person name="Shabanowitz J."/>
            <person name="Hearing V.J."/>
            <person name="Wu C."/>
            <person name="Appella E."/>
            <person name="Hunt D.F."/>
        </authorList>
    </citation>
    <scope>SUBCELLULAR LOCATION [LARGE SCALE ANALYSIS]</scope>
    <source>
        <tissue>Melanoma</tissue>
    </source>
</reference>
<reference key="10">
    <citation type="journal article" date="2008" name="J. Biol. Chem.">
        <title>Transmembrane segment 6 of the Glut1 glucose transporter is an outer helix and contains amino acid side chains essential for transport activity.</title>
        <authorList>
            <person name="Mueckler M."/>
            <person name="Makepeace C."/>
        </authorList>
    </citation>
    <scope>FUNCTION</scope>
    <scope>SUBCELLULAR LOCATION</scope>
    <scope>MUTAGENESIS OF ILE-192; LEU-204 AND PRO-205</scope>
</reference>
<reference key="11">
    <citation type="journal article" date="2008" name="J. Biol. Chem.">
        <title>Dematin and adducin provide a novel link between the spectrin cytoskeleton and human erythrocyte membrane by directly interacting with glucose transporter-1.</title>
        <authorList>
            <person name="Khan A.A."/>
            <person name="Hanada T."/>
            <person name="Mohseni M."/>
            <person name="Jeong J.J."/>
            <person name="Zeng L."/>
            <person name="Gaetani M."/>
            <person name="Li D."/>
            <person name="Reed B.C."/>
            <person name="Speicher D.W."/>
            <person name="Chishti A.H."/>
        </authorList>
    </citation>
    <scope>IDENTIFICATION IN A COMPLEX WITH ADD2 AND DMTN</scope>
    <scope>INTERACTION WITH DMTN</scope>
    <scope>IDENTIFICATION BY MASS SPECTROMETRY</scope>
</reference>
<reference key="12">
    <citation type="journal article" date="2008" name="Mol. Cell">
        <title>Kinase-selective enrichment enables quantitative phosphoproteomics of the kinome across the cell cycle.</title>
        <authorList>
            <person name="Daub H."/>
            <person name="Olsen J.V."/>
            <person name="Bairlein M."/>
            <person name="Gnad F."/>
            <person name="Oppermann F.S."/>
            <person name="Korner R."/>
            <person name="Greff Z."/>
            <person name="Keri G."/>
            <person name="Stemmann O."/>
            <person name="Mann M."/>
        </authorList>
    </citation>
    <scope>IDENTIFICATION BY MASS SPECTROMETRY [LARGE SCALE ANALYSIS]</scope>
    <source>
        <tissue>Cervix carcinoma</tissue>
    </source>
</reference>
<reference key="13">
    <citation type="journal article" date="2009" name="Biochemistry">
        <title>Model of the exofacial substrate-binding site and helical folding of the human Glut1 glucose transporter based on scanning mutagenesis.</title>
        <authorList>
            <person name="Mueckler M."/>
            <person name="Makepeace C."/>
        </authorList>
    </citation>
    <scope>FUNCTION</scope>
    <scope>SUBCELLULAR LOCATION</scope>
    <scope>MUTAGENESIS OF GLY-340</scope>
</reference>
<reference key="14">
    <citation type="journal article" date="2009" name="Nat. Biotechnol.">
        <title>Mass-spectrometric identification and relative quantification of N-linked cell surface glycoproteins.</title>
        <authorList>
            <person name="Wollscheid B."/>
            <person name="Bausch-Fluck D."/>
            <person name="Henderson C."/>
            <person name="O'Brien R."/>
            <person name="Bibel M."/>
            <person name="Schiess R."/>
            <person name="Aebersold R."/>
            <person name="Watts J.D."/>
        </authorList>
    </citation>
    <scope>GLYCOSYLATION [LARGE SCALE ANALYSIS] AT ASN-45</scope>
    <source>
        <tissue>Leukemic T-cell</tissue>
    </source>
</reference>
<reference key="15">
    <citation type="journal article" date="2010" name="Sci. Signal.">
        <title>Quantitative phosphoproteomics reveals widespread full phosphorylation site occupancy during mitosis.</title>
        <authorList>
            <person name="Olsen J.V."/>
            <person name="Vermeulen M."/>
            <person name="Santamaria A."/>
            <person name="Kumar C."/>
            <person name="Miller M.L."/>
            <person name="Jensen L.J."/>
            <person name="Gnad F."/>
            <person name="Cox J."/>
            <person name="Jensen T.S."/>
            <person name="Nigg E.A."/>
            <person name="Brunak S."/>
            <person name="Mann M."/>
        </authorList>
    </citation>
    <scope>PHOSPHORYLATION [LARGE SCALE ANALYSIS] AT THR-478</scope>
    <scope>IDENTIFICATION BY MASS SPECTROMETRY [LARGE SCALE ANALYSIS]</scope>
    <source>
        <tissue>Cervix carcinoma</tissue>
    </source>
</reference>
<reference key="16">
    <citation type="journal article" date="2011" name="BMC Syst. Biol.">
        <title>Initial characterization of the human central proteome.</title>
        <authorList>
            <person name="Burkard T.R."/>
            <person name="Planyavsky M."/>
            <person name="Kaupe I."/>
            <person name="Breitwieser F.P."/>
            <person name="Buerckstuemmer T."/>
            <person name="Bennett K.L."/>
            <person name="Superti-Furga G."/>
            <person name="Colinge J."/>
        </authorList>
    </citation>
    <scope>IDENTIFICATION BY MASS SPECTROMETRY [LARGE SCALE ANALYSIS]</scope>
</reference>
<reference key="17">
    <citation type="journal article" date="2011" name="Sci. Signal.">
        <title>System-wide temporal characterization of the proteome and phosphoproteome of human embryonic stem cell differentiation.</title>
        <authorList>
            <person name="Rigbolt K.T."/>
            <person name="Prokhorova T.A."/>
            <person name="Akimov V."/>
            <person name="Henningsen J."/>
            <person name="Johansen P.T."/>
            <person name="Kratchmarova I."/>
            <person name="Kassem M."/>
            <person name="Mann M."/>
            <person name="Olsen J.V."/>
            <person name="Blagoev B."/>
        </authorList>
    </citation>
    <scope>PHOSPHORYLATION [LARGE SCALE ANALYSIS] AT SER-490</scope>
    <scope>IDENTIFICATION BY MASS SPECTROMETRY [LARGE SCALE ANALYSIS]</scope>
</reference>
<reference key="18">
    <citation type="journal article" date="2012" name="Proc. Natl. Acad. Sci. U.S.A.">
        <title>N-terminal acetylome analyses and functional insights of the N-terminal acetyltransferase NatB.</title>
        <authorList>
            <person name="Van Damme P."/>
            <person name="Lasa M."/>
            <person name="Polevoda B."/>
            <person name="Gazquez C."/>
            <person name="Elosegui-Artola A."/>
            <person name="Kim D.S."/>
            <person name="De Juan-Pardo E."/>
            <person name="Demeyer K."/>
            <person name="Hole K."/>
            <person name="Larrea E."/>
            <person name="Timmerman E."/>
            <person name="Prieto J."/>
            <person name="Arnesen T."/>
            <person name="Sherman F."/>
            <person name="Gevaert K."/>
            <person name="Aldabe R."/>
        </authorList>
    </citation>
    <scope>ACETYLATION [LARGE SCALE ANALYSIS] AT MET-1</scope>
    <scope>IDENTIFICATION BY MASS SPECTROMETRY [LARGE SCALE ANALYSIS]</scope>
</reference>
<reference key="19">
    <citation type="journal article" date="2013" name="Biochim. Biophys. Acta">
        <title>Stomatin interacts with GLUT1/SLC2A1, band 3/SLC4A1, and aquaporin-1 in human erythrocyte membrane domains.</title>
        <authorList>
            <person name="Rungaldier S."/>
            <person name="Oberwagner W."/>
            <person name="Salzer U."/>
            <person name="Csaszar E."/>
            <person name="Prohaska R."/>
        </authorList>
    </citation>
    <scope>SUBCELLULAR LOCATION</scope>
    <scope>TISSUE SPECIFICITY</scope>
    <scope>INTERACTION WITH STOM</scope>
    <scope>SUBUNIT</scope>
</reference>
<reference key="20">
    <citation type="journal article" date="2013" name="J. Proteome Res.">
        <title>Toward a comprehensive characterization of a human cancer cell phosphoproteome.</title>
        <authorList>
            <person name="Zhou H."/>
            <person name="Di Palma S."/>
            <person name="Preisinger C."/>
            <person name="Peng M."/>
            <person name="Polat A.N."/>
            <person name="Heck A.J."/>
            <person name="Mohammed S."/>
        </authorList>
    </citation>
    <scope>PHOSPHORYLATION [LARGE SCALE ANALYSIS] AT SER-465 AND SER-490</scope>
    <scope>IDENTIFICATION BY MASS SPECTROMETRY [LARGE SCALE ANALYSIS]</scope>
    <source>
        <tissue>Cervix carcinoma</tissue>
        <tissue>Erythroleukemia</tissue>
    </source>
</reference>
<reference key="21">
    <citation type="journal article" date="2013" name="Nat. Cell Biol.">
        <title>A global analysis of SNX27-retromer assembly and cargo specificity reveals a function in glucose and metal ion transport.</title>
        <authorList>
            <person name="Steinberg F."/>
            <person name="Gallon M."/>
            <person name="Winfield M."/>
            <person name="Thomas E.C."/>
            <person name="Bell A.J."/>
            <person name="Heesom K.J."/>
            <person name="Tavare J.M."/>
            <person name="Cullen P.J."/>
        </authorList>
    </citation>
    <scope>INTERACTION WITH SNX27</scope>
</reference>
<reference key="22">
    <citation type="journal article" date="2014" name="J. Proteomics">
        <title>An enzyme assisted RP-RPLC approach for in-depth analysis of human liver phosphoproteome.</title>
        <authorList>
            <person name="Bian Y."/>
            <person name="Song C."/>
            <person name="Cheng K."/>
            <person name="Dong M."/>
            <person name="Wang F."/>
            <person name="Huang J."/>
            <person name="Sun D."/>
            <person name="Wang L."/>
            <person name="Ye M."/>
            <person name="Zou H."/>
        </authorList>
    </citation>
    <scope>PHOSPHORYLATION [LARGE SCALE ANALYSIS] AT SER-490</scope>
    <scope>IDENTIFICATION BY MASS SPECTROMETRY [LARGE SCALE ANALYSIS]</scope>
    <source>
        <tissue>Liver</tissue>
    </source>
</reference>
<reference key="23">
    <citation type="journal article" date="2015" name="Cell">
        <title>Rod-derived cone viability factor promotes cone survival by stimulating aerobic glycolysis.</title>
        <authorList>
            <person name="Ait-Ali N."/>
            <person name="Fridlich R."/>
            <person name="Millet-Puel G."/>
            <person name="Clerin E."/>
            <person name="Delalande F."/>
            <person name="Jaillard C."/>
            <person name="Blond F."/>
            <person name="Perrocheau L."/>
            <person name="Reichman S."/>
            <person name="Byrne L.C."/>
            <person name="Olivier-Bandini A."/>
            <person name="Bellalou J."/>
            <person name="Moyse E."/>
            <person name="Bouillaud F."/>
            <person name="Nicol X."/>
            <person name="Dalkara D."/>
            <person name="van Dorsselaer A."/>
            <person name="Sahel J.A."/>
            <person name="Leveillard T."/>
        </authorList>
    </citation>
    <scope>INTERACTION WITH BSG</scope>
</reference>
<reference key="24">
    <citation type="journal article" date="2015" name="Mol. Cell">
        <title>A protein kinase C phosphorylation motif in GLUT1 affects glucose transport and is mutated in GLUT1 deficiency syndrome.</title>
        <authorList>
            <person name="Lee E.E."/>
            <person name="Ma J."/>
            <person name="Sacharidou A."/>
            <person name="Mi W."/>
            <person name="Salato V.K."/>
            <person name="Nguyen N."/>
            <person name="Jiang Y."/>
            <person name="Pascual J.M."/>
            <person name="North P.E."/>
            <person name="Shaul P.W."/>
            <person name="Mettlen M."/>
            <person name="Wang R.C."/>
        </authorList>
    </citation>
    <scope>FUNCTION</scope>
    <scope>TRANSPORTER ACTIVITY</scope>
    <scope>BIOPHYSICOCHEMICAL PROPERTIES</scope>
    <scope>SUBCELLULAR LOCATION</scope>
    <scope>PHOSPHORYLATION AT SER-226</scope>
    <scope>MUTAGENESIS OF SER-226</scope>
    <scope>CHARACTERIZATION OF VARIANTS EIG12 PRO-223 AND GLN-223</scope>
    <scope>CHARACTERIZATION OF VARIANT GLUT1DS1 TRP-223</scope>
</reference>
<reference key="25">
    <citation type="journal article" date="2020" name="Cell">
        <title>Structural Basis for Blocking Sugar Uptake into the Malaria Parasite Plasmodium falciparum.</title>
        <authorList>
            <person name="Jiang X."/>
            <person name="Yuan Y."/>
            <person name="Huang J."/>
            <person name="Zhang S."/>
            <person name="Luo S."/>
            <person name="Wang N."/>
            <person name="Pu D."/>
            <person name="Zhao N."/>
            <person name="Tang Q."/>
            <person name="Hirata K."/>
            <person name="Yang X."/>
            <person name="Jiao Y."/>
            <person name="Sakata-Kato T."/>
            <person name="Wu J.W."/>
            <person name="Yan C."/>
            <person name="Kato N."/>
            <person name="Yin H."/>
            <person name="Yan N."/>
        </authorList>
    </citation>
    <scope>FUNCTION</scope>
    <scope>TRANSPORTER ACTIVITY</scope>
</reference>
<reference key="26">
    <citation type="journal article" date="2022" name="Nat. Commun.">
        <title>A Nodal enhanced micropeptide NEMEP regulates glucose uptake during mesendoderm differentiation of embryonic stem cells.</title>
        <authorList>
            <person name="Fu H."/>
            <person name="Wang T."/>
            <person name="Kong X."/>
            <person name="Yan K."/>
            <person name="Yang Y."/>
            <person name="Cao J."/>
            <person name="Yuan Y."/>
            <person name="Wang N."/>
            <person name="Kee K."/>
            <person name="Lu Z.J."/>
            <person name="Xi Q."/>
        </authorList>
    </citation>
    <scope>INTERACTION WITH SMIM43</scope>
</reference>
<reference evidence="51" key="27">
    <citation type="journal article" date="2014" name="Nature">
        <title>Crystal structure of the human glucose transporter GLUT1.</title>
        <authorList>
            <person name="Deng D."/>
            <person name="Xu C."/>
            <person name="Sun P."/>
            <person name="Wu J."/>
            <person name="Yan C."/>
            <person name="Hu M."/>
            <person name="Yan N."/>
        </authorList>
    </citation>
    <scope>X-RAY CRYSTALLOGRAPHY (3.2 ANGSTROMS) OF VARIANT GLUT1DS1 GLN-329 IN COMPLEX WITH NONYL-BETA-D-GLUCOSIDE</scope>
    <scope>SUBCELLULAR LOCATION</scope>
    <scope>TOPOLOGY</scope>
    <scope>MUTAGENESIS OF ASN-45</scope>
</reference>
<reference evidence="52 53 54" key="28">
    <citation type="journal article" date="2016" name="Proc. Natl. Acad. Sci. U.S.A.">
        <title>Mechanism of inhibition of human glucose transporter GLUT1 is conserved between cytochalasin B and phenylalanine amides.</title>
        <authorList>
            <person name="Kapoor K."/>
            <person name="Finer-Moore J.S."/>
            <person name="Pedersen B.P."/>
            <person name="Caboni L."/>
            <person name="Waight A."/>
            <person name="Hillig R.C."/>
            <person name="Bringmann P."/>
            <person name="Heisler I."/>
            <person name="Muller T."/>
            <person name="Siebeneicher H."/>
            <person name="Stroud R.M."/>
        </authorList>
    </citation>
    <scope>X-RAY CRYSTALLOGRAPHY (2.90 ANGSTROMS) IN COMPLEX WITH CYTOCHALASIN B</scope>
    <scope>FUNCTION</scope>
    <scope>TRANSPORTER ACTIVITY</scope>
    <scope>ACTIVITY REGULATION</scope>
</reference>
<reference key="29">
    <citation type="journal article" date="1999" name="Neurochem. Res.">
        <title>Defective glucose transport across brain tissue barriers: a newly recognized neurological syndrome.</title>
        <authorList>
            <person name="Klepper J."/>
            <person name="Wang D."/>
            <person name="Fischbarg J."/>
            <person name="Vera J.C."/>
            <person name="Jarjour I.T."/>
            <person name="O'Driscoll K.R."/>
            <person name="De Vivo D.C."/>
        </authorList>
    </citation>
    <scope>VARIANT GLUT1DS1 ILE-310</scope>
    <scope>FUNCTION</scope>
    <scope>TRANSPORTER ACTIVITY</scope>
</reference>
<reference key="30">
    <citation type="journal article" date="2000" name="Hum. Mutat.">
        <title>Mutational analysis of GLUT1 (SLC2A1) in Glut-1 deficiency syndrome.</title>
        <authorList>
            <person name="Wang D."/>
            <person name="Kranz-Eble P."/>
            <person name="De Vivo D.C."/>
        </authorList>
    </citation>
    <scope>VARIANTS GLUT1DS1 PHE-66; LEU-126; LYS-146; GLU-256 AND TRP-333</scope>
</reference>
<reference key="31">
    <citation type="journal article" date="2000" name="Hum. Mutat.">
        <authorList>
            <person name="Wang D."/>
            <person name="Kranz-Eble P."/>
            <person name="De Vivo D.C."/>
        </authorList>
    </citation>
    <scope>ERRATUM OF PUBMED:10980529</scope>
</reference>
<reference key="32">
    <citation type="journal article" date="2001" name="Ann. Neurol.">
        <title>Autosomal dominant Glut-1 deficiency syndrome and familial epilepsy.</title>
        <authorList>
            <person name="Brockmann K."/>
            <person name="Wang D."/>
            <person name="Korenke C.G."/>
            <person name="von Moers A."/>
            <person name="Ho Y.-Y."/>
            <person name="Pascual J.M."/>
            <person name="Kuang K."/>
            <person name="Yang H."/>
            <person name="Ma L."/>
            <person name="Kranz-Eble P."/>
            <person name="Fischbarg J."/>
            <person name="Hanefeld F."/>
            <person name="De Vivo D.C."/>
        </authorList>
    </citation>
    <scope>VARIANT GLUT1DS1 HIS-126</scope>
</reference>
<reference key="33">
    <citation type="journal article" date="2001" name="Hum. Mol. Genet.">
        <title>Autosomal dominant transmission of GLUT1 deficiency.</title>
        <authorList>
            <person name="Klepper J."/>
            <person name="Willemsen M."/>
            <person name="Verrips A."/>
            <person name="Guertsen E."/>
            <person name="Herrmann R."/>
            <person name="Kutzick C."/>
            <person name="Floercken A."/>
            <person name="Voit T."/>
        </authorList>
    </citation>
    <scope>VARIANT GLUT1DS1 ASP-91</scope>
</reference>
<reference key="34">
    <citation type="journal article" date="2002" name="Ann. Neurol.">
        <title>Imaging the metabolic footprint of Glut1 deficiency on the brain.</title>
        <authorList>
            <person name="Pascual J.M."/>
            <person name="van Heertum R.L."/>
            <person name="Wang D."/>
            <person name="Engelstad K."/>
            <person name="De Vivo D.C."/>
        </authorList>
    </citation>
    <scope>VARIANTS GLUT1DS1 CYS-126; HIS-126; LYS-146; CYS-153 AND TRP-333</scope>
</reference>
<reference key="35">
    <citation type="journal article" date="2003" name="J. Inherit. Metab. Dis.">
        <title>GLUT-1 deficiency without epilepsy -- an exceptional case.</title>
        <authorList>
            <person name="Overweg-Plandsoen W.C.G."/>
            <person name="Groener J.E.M."/>
            <person name="Wang D."/>
            <person name="Onkenhout W."/>
            <person name="Brouwer O.F."/>
            <person name="Bakker H.D."/>
            <person name="De Vivo D.C."/>
        </authorList>
    </citation>
    <scope>VARIANT GLUT1DS2 ILE-34</scope>
</reference>
<reference key="36">
    <citation type="journal article" date="2005" name="Ann. Neurol.">
        <title>Glut-1 deficiency syndrome: clinical, genetic, and therapeutic aspects.</title>
        <authorList>
            <person name="Wang D."/>
            <person name="Pascual J.M."/>
            <person name="Yang H."/>
            <person name="Engelstad K."/>
            <person name="Jhung S."/>
            <person name="Sun R.P."/>
            <person name="De Vivo D.C."/>
        </authorList>
    </citation>
    <scope>VARIANTS GLUT1DS1 SER-34; HIS-126; SER-130; CYS-153; LEU-169 DEL; MET-295 AND TRP-333</scope>
    <scope>CHARACTERIZATION OF VARIANTS GLUT1 DEFICIENCY SER-34; HIS-126; SER-130; CYS-153; LEU-169 DEL; MET-295 AND TRP-333</scope>
</reference>
<reference key="37">
    <citation type="journal article" date="2008" name="J. Clin. Invest.">
        <title>GLUT1 mutations are a cause of paroxysmal exertion-induced dyskinesias and induce hemolytic anemia by a cation leak.</title>
        <authorList>
            <person name="Weber Y.G."/>
            <person name="Storch A."/>
            <person name="Wuttke T.V."/>
            <person name="Brockmann K."/>
            <person name="Kempfle J."/>
            <person name="Maljevic S."/>
            <person name="Margari L."/>
            <person name="Kamm C."/>
            <person name="Schneider S.A."/>
            <person name="Huber S.M."/>
            <person name="Pekrun A."/>
            <person name="Roebling R."/>
            <person name="Seebohm G."/>
            <person name="Koka S."/>
            <person name="Lang C."/>
            <person name="Kraft E."/>
            <person name="Blazevic D."/>
            <person name="Salvo-Vargas A."/>
            <person name="Fauler M."/>
            <person name="Mottaghy F.M."/>
            <person name="Muenchau A."/>
            <person name="Edwards M.J."/>
            <person name="Presicci A."/>
            <person name="Margari F."/>
            <person name="Gasser T."/>
            <person name="Lang F."/>
            <person name="Bhatia K.P."/>
            <person name="Lehmann-Horn F."/>
            <person name="Lerche H."/>
        </authorList>
    </citation>
    <scope>VARIANTS GLUT1DS2 THR-275; 282-GLN--SER-285 DEL AND SER-314</scope>
</reference>
<reference key="38">
    <citation type="journal article" date="2009" name="Ann. Neurol.">
        <title>Early-onset absence epilepsy caused by mutations in the glucose transporter GLUT1.</title>
        <authorList>
            <person name="Suls A."/>
            <person name="Mullen S.A."/>
            <person name="Weber Y.G."/>
            <person name="Verhaert K."/>
            <person name="Ceulemans B."/>
            <person name="Guerrini R."/>
            <person name="Wuttke T.V."/>
            <person name="Salvo-Vargas A."/>
            <person name="Deprez L."/>
            <person name="Claes L.R."/>
            <person name="Jordanova A."/>
            <person name="Berkovic S.F."/>
            <person name="Lerche H."/>
            <person name="De Jonghe P."/>
            <person name="Scheffer I.E."/>
        </authorList>
    </citation>
    <scope>VARIANT EIG12 PRO-223</scope>
    <scope>VARIANTS GLUT1DS2 CYS-126 AND LEU-324</scope>
    <scope>CHARACTERIZATION OF VARIANT EIG12 PRO-223</scope>
    <scope>CHARACTERIZATION OF VARIANTS GLUT1DS2 CYS-126 AND LEU-324</scope>
</reference>
<reference key="39">
    <citation type="journal article" date="2009" name="Arch. Neurol.">
        <title>Childhood chorea with cerebral hypotrophy: a treatable GLUT1 energy failure syndrome.</title>
        <authorList>
            <person name="Perez-Duenas B."/>
            <person name="Prior C."/>
            <person name="Ma Q."/>
            <person name="Fernandez-Alvarez E."/>
            <person name="Setoain X."/>
            <person name="Artuch R."/>
            <person name="Pascual J.M."/>
        </authorList>
    </citation>
    <scope>VARIANT GLUT1DS1 TYR-292 INS</scope>
</reference>
<reference key="40">
    <citation type="journal article" date="2009" name="Mov. Disord.">
        <title>GLUT1 gene mutations cause sporadic paroxysmal exercise-induced dyskinesias.</title>
        <authorList>
            <person name="Schneider S.A."/>
            <person name="Paisan-Ruiz C."/>
            <person name="Garcia-Gorostiaga I."/>
            <person name="Quinn N.P."/>
            <person name="Weber Y.G."/>
            <person name="Lerche H."/>
            <person name="Hardy J."/>
            <person name="Bhatia K.P."/>
        </authorList>
    </citation>
    <scope>VARIANTS GLUT1DS2 TRP-92 AND GLN-333</scope>
</reference>
<reference key="41">
    <citation type="journal article" date="2009" name="Neuropediatrics">
        <title>Autosomal recessive inheritance of GLUT1 deficiency syndrome.</title>
        <authorList>
            <person name="Klepper J."/>
            <person name="Scheffer H."/>
            <person name="Elsaid M.F."/>
            <person name="Kamsteeg E.J."/>
            <person name="Leferink M."/>
            <person name="Ben-Omran T."/>
        </authorList>
    </citation>
    <scope>VARIANT GLUT1DS1 TRP-468</scope>
</reference>
<reference key="42">
    <citation type="journal article" date="2010" name="Brain">
        <title>Glucose transporter-1 deficiency syndrome: the expanding clinical and genetic spectrum of a treatable disorder.</title>
        <authorList>
            <person name="Leen W.G."/>
            <person name="Klepper J."/>
            <person name="Verbeek M.M."/>
            <person name="Leferink M."/>
            <person name="Hofste T."/>
            <person name="van Engelen B.G."/>
            <person name="Wevers R.A."/>
            <person name="Arthur T."/>
            <person name="Bahi-Buisson N."/>
            <person name="Ballhausen D."/>
            <person name="Bekhof J."/>
            <person name="van Bogaert P."/>
            <person name="Carrilho I."/>
            <person name="Chabrol B."/>
            <person name="Champion M.P."/>
            <person name="Coldwell J."/>
            <person name="Clayton P."/>
            <person name="Donner E."/>
            <person name="Evangeliou A."/>
            <person name="Ebinger F."/>
            <person name="Farrell K."/>
            <person name="Forsyth R.J."/>
            <person name="de Goede C.G."/>
            <person name="Gross S."/>
            <person name="Grunewald S."/>
            <person name="Holthausen H."/>
            <person name="Jayawant S."/>
            <person name="Lachlan K."/>
            <person name="Laugel V."/>
            <person name="Leppig K."/>
            <person name="Lim M.J."/>
            <person name="Mancini G."/>
            <person name="Marina A.D."/>
            <person name="Martorell L."/>
            <person name="McMenamin J."/>
            <person name="Meuwissen M.E."/>
            <person name="Mundy H."/>
            <person name="Nilsson N.O."/>
            <person name="Panzer A."/>
            <person name="Poll-The B.T."/>
            <person name="Rauscher C."/>
            <person name="Rouselle C.M."/>
            <person name="Sandvig I."/>
            <person name="Scheffner T."/>
            <person name="Sheridan E."/>
            <person name="Simpson N."/>
            <person name="Sykora P."/>
            <person name="Tomlinson R."/>
            <person name="Trounce J."/>
            <person name="Webb D."/>
            <person name="Weschke B."/>
            <person name="Scheffer H."/>
            <person name="Willemsen M.A."/>
        </authorList>
    </citation>
    <scope>VARIANTS GLUT1DS1 TYR-34; VAL-96; SER-130; VAL-155; CYS-212; HIS-212; TRP-223; MET-295; GLN-329; GLN-333; ASP-382; ASP-405 AND LEU-485</scope>
    <scope>VARIANTS GLUT1DS2 TRP-93 AND HIS-153</scope>
    <scope>VARIANT LEU-303</scope>
</reference>
<reference key="43">
    <citation type="journal article" date="2010" name="Epilepsia">
        <title>Mild adolescent/adult onset epilepsy and paroxysmal exercise-induced dyskinesia due to GLUT1 deficiency.</title>
        <authorList>
            <person name="Afawi Z."/>
            <person name="Suls A."/>
            <person name="Ekstein D."/>
            <person name="Kivity S."/>
            <person name="Neufeld M.Y."/>
            <person name="Oliver K."/>
            <person name="De Jonghe P."/>
            <person name="Korczyn A.D."/>
            <person name="Berkovic S.F."/>
        </authorList>
    </citation>
    <scope>VARIANT GLUT1DS2 THR-317</scope>
</reference>
<reference key="44">
    <citation type="journal article" date="2010" name="J. Neurol. Sci.">
        <title>Paroxysmal exercise-induced dyskinesia, writer's cramp, migraine with aura and absence epilepsy in twin brothers with a novel SLC2A1 missense mutation.</title>
        <authorList>
            <person name="Urbizu A."/>
            <person name="Cuenca-Leon E."/>
            <person name="Raspall-Chaure M."/>
            <person name="Gratacos M."/>
            <person name="Conill J."/>
            <person name="Redecillas S."/>
            <person name="Roig-Quilis M."/>
            <person name="Macaya A."/>
        </authorList>
    </citation>
    <scope>VARIANT GLUT1DS2 ILE-165</scope>
</reference>
<reference key="45">
    <citation type="journal article" date="2010" name="Neurology">
        <title>Absence epilepsies with widely variable onset are a key feature of familial GLUT1 deficiency.</title>
        <authorList>
            <person name="Mullen S.A."/>
            <person name="Suls A."/>
            <person name="De Jonghe P."/>
            <person name="Berkovic S.F."/>
            <person name="Scheffer I.E."/>
        </authorList>
    </citation>
    <scope>VARIANTS GLUT1DS2 ILE-95; PRO-223; SER-314 AND LEU-324</scope>
    <scope>VARIANTS GLUT1DS1 ASP-91 AND HIS-126</scope>
</reference>
<reference key="46">
    <citation type="journal article" date="2011" name="Blood">
        <title>Stomatin-deficient cryohydrocytosis results from mutations in SLC2A1: a novel form of GLUT1 deficiency syndrome.</title>
        <authorList>
            <person name="Flatt J.F."/>
            <person name="Guizouarn H."/>
            <person name="Burton N.M."/>
            <person name="Borgese F."/>
            <person name="Tomlinson R.J."/>
            <person name="Forsyth R.J."/>
            <person name="Baldwin S.A."/>
            <person name="Levinson B.E."/>
            <person name="Quittet P."/>
            <person name="Aguilar-Martinez P."/>
            <person name="Delaunay J."/>
            <person name="Stewart G.W."/>
            <person name="Bruce L.J."/>
        </authorList>
    </citation>
    <scope>INVOLVEMENT IN SDCHCN</scope>
    <scope>VARIANTS SDCHCN ASP-286 AND ILE-435 DEL</scope>
    <scope>CHARACTERIZATION OF VARIANTS SDCHCN ASP-286 AND ILE-435 DEL</scope>
</reference>
<reference key="47">
    <citation type="journal article" date="2011" name="J. Neurol.">
        <title>Excellent response to acetazolamide in a case of paroxysmal dyskinesias due to GLUT1-deficiency.</title>
        <authorList>
            <person name="Anheim M."/>
            <person name="Maillart E."/>
            <person name="Vuillaumier-Barrot S."/>
            <person name="Flamand-Rouviere C."/>
            <person name="Pineau F."/>
            <person name="Ewenczyk C."/>
            <person name="Riant F."/>
            <person name="Apartis E."/>
            <person name="Roze E."/>
        </authorList>
    </citation>
    <scope>VARIANT GLUT1DS2 PRO-294</scope>
</reference>
<reference key="48">
    <citation type="journal article" date="2011" name="Neurology">
        <title>Paroxysmal choreoathetosis/spasticity (DYT9) is caused by a GLUT1 defect.</title>
        <authorList>
            <person name="Weber Y.G."/>
            <person name="Kamm C."/>
            <person name="Suls A."/>
            <person name="Kempfle J."/>
            <person name="Kotschet K."/>
            <person name="Schule R."/>
            <person name="Wuttke T.V."/>
            <person name="Maljevic S."/>
            <person name="Liebrich J."/>
            <person name="Gasser T."/>
            <person name="Ludolph A.C."/>
            <person name="Van Paesschen W."/>
            <person name="Schols L."/>
            <person name="De Jonghe P."/>
            <person name="Auburger G."/>
            <person name="Lerche H."/>
        </authorList>
    </citation>
    <scope>VARIANTS DYT9 CYS-126 AND CYS-212</scope>
</reference>
<reference key="49">
    <citation type="journal article" date="2012" name="Ann. Neurol.">
        <title>Glucose transporter 1 deficiency in the idiopathic generalized epilepsies.</title>
        <authorList>
            <person name="Arsov T."/>
            <person name="Mullen S.A."/>
            <person name="Rogers S."/>
            <person name="Phillips A.M."/>
            <person name="Lawrence K.M."/>
            <person name="Damiano J.A."/>
            <person name="Goldberg-Stern H."/>
            <person name="Afawi Z."/>
            <person name="Kivity S."/>
            <person name="Trager C."/>
            <person name="Petrou S."/>
            <person name="Berkovic S.F."/>
            <person name="Scheffer I.E."/>
        </authorList>
    </citation>
    <scope>VARIANTS EIG12 HIS-51; MET-60; THR-77; ALA-149; SER-218; GLN-223; VAL-243; SER-411 AND TRP-458</scope>
    <scope>CHARACTERIZATION OF VARIANTS EIG12 MET-60; THR-77; SER-218; GLN-223; VAL-243; SER-411 AND TRP-458</scope>
</reference>
<reference key="50">
    <citation type="journal article" date="2012" name="J. Clin. Endocrinol. Metab.">
        <title>An infant with pseudohyperkalemia, hemolysis, and seizures: cation-leaky GLUT1-deficiency syndrome due to a SLC2A1 mutation.</title>
        <authorList>
            <person name="Bawazir W.M."/>
            <person name="Gevers E.F."/>
            <person name="Flatt J.F."/>
            <person name="Ang A.L."/>
            <person name="Jacobs B."/>
            <person name="Oren C."/>
            <person name="Grunewald S."/>
            <person name="Dattani M."/>
            <person name="Bruce L.J."/>
            <person name="Stewart G.W."/>
        </authorList>
    </citation>
    <scope>INVOLVEMENT IN SDCHCN</scope>
    <scope>VARIANT SDCHCN ILE-435 DEL</scope>
    <scope>CHARACTERIZATION OF VARIANT SDCHCN ILE-435 DEL</scope>
</reference>
<reference key="51">
    <citation type="journal article" date="2012" name="Neurology">
        <title>GLUT1 mutations are a rare cause of familial idiopathic generalized epilepsy.</title>
        <authorList>
            <person name="Striano P."/>
            <person name="Weber Y.G."/>
            <person name="Toliat M.R."/>
            <person name="Schubert J."/>
            <person name="Leu C."/>
            <person name="Chaimana R."/>
            <person name="Baulac S."/>
            <person name="Guerrero R."/>
            <person name="LeGuern E."/>
            <person name="Lehesjoki A.E."/>
            <person name="Polvi A."/>
            <person name="Robbiano A."/>
            <person name="Serratosa J.M."/>
            <person name="Guerrini R."/>
            <person name="Nurnberg P."/>
            <person name="Sander T."/>
            <person name="Zara F."/>
            <person name="Lerche H."/>
            <person name="Marini C."/>
        </authorList>
    </citation>
    <scope>VARIANT EIG12 CYS-232</scope>
    <scope>CHARACTERIZATION OF VARIANT EIG12 CYS-232</scope>
</reference>
<reference key="52">
    <citation type="journal article" date="2018" name="Cell">
        <title>Mutations in disordered regions can cause disease by creating dileucine motifs.</title>
        <authorList>
            <person name="Meyer K."/>
            <person name="Kirchner M."/>
            <person name="Uyar B."/>
            <person name="Cheng J.Y."/>
            <person name="Russo G."/>
            <person name="Hernandez-Miranda L.R."/>
            <person name="Szymborska A."/>
            <person name="Zauber H."/>
            <person name="Rudolph I.M."/>
            <person name="Willnow T.E."/>
            <person name="Akalin A."/>
            <person name="Haucke V."/>
            <person name="Gerhardt H."/>
            <person name="Birchmeier C."/>
            <person name="Kuehn R."/>
            <person name="Krauss M."/>
            <person name="Diecke S."/>
            <person name="Pascual J.M."/>
            <person name="Selbach M."/>
        </authorList>
    </citation>
    <scope>CHARACTERIZATION OF VARIANT GLUT1DS1 LEU-485</scope>
    <scope>SUBCELLULAR LOCATION</scope>
</reference>
<organism>
    <name type="scientific">Homo sapiens</name>
    <name type="common">Human</name>
    <dbReference type="NCBI Taxonomy" id="9606"/>
    <lineage>
        <taxon>Eukaryota</taxon>
        <taxon>Metazoa</taxon>
        <taxon>Chordata</taxon>
        <taxon>Craniata</taxon>
        <taxon>Vertebrata</taxon>
        <taxon>Euteleostomi</taxon>
        <taxon>Mammalia</taxon>
        <taxon>Eutheria</taxon>
        <taxon>Euarchontoglires</taxon>
        <taxon>Primates</taxon>
        <taxon>Haplorrhini</taxon>
        <taxon>Catarrhini</taxon>
        <taxon>Hominidae</taxon>
        <taxon>Homo</taxon>
    </lineage>
</organism>
<sequence length="492" mass="54084">MEPSSKKLTGRLMLAVGGAVLGSLQFGYNTGVINAPQKVIEEFYNQTWVHRYGESILPTTLTTLWSLSVAIFSVGGMIGSFSVGLFVNRFGRRNSMLMMNLLAFVSAVLMGFSKLGKSFEMLILGRFIIGVYCGLTTGFVPMYVGEVSPTALRGALGTLHQLGIVVGILIAQVFGLDSIMGNKDLWPLLLSIIFIPALLQCIVLPFCPESPRFLLINRNEENRAKSVLKKLRGTADVTHDLQEMKEESRQMMREKKVTILELFRSPAYRQPILIAVVLQLSQQLSGINAVFYYSTSIFEKAGVQQPVYATIGSGIVNTAFTVVSLFVVERAGRRTLHLIGLAGMAGCAILMTIALALLEQLPWMSYLSIVAIFGFVAFFEVGPGPIPWFIVAELFSQGPRPAAIAVAGFSNWTSNFIVGMCFQYVEQLCGPYVFIIFTVLLVLFFIFTYFKVPETKGRTFDEIASGFRQGGASQSDKTPEELFHPLGADSQV</sequence>
<keyword id="KW-0002">3D-structure</keyword>
<keyword id="KW-0007">Acetylation</keyword>
<keyword id="KW-0898">Cataract</keyword>
<keyword id="KW-1003">Cell membrane</keyword>
<keyword id="KW-0903">Direct protein sequencing</keyword>
<keyword id="KW-0225">Disease variant</keyword>
<keyword id="KW-1023">Dystonia</keyword>
<keyword id="KW-0887">Epilepsy</keyword>
<keyword id="KW-0325">Glycoprotein</keyword>
<keyword id="KW-0360">Hereditary hemolytic anemia</keyword>
<keyword id="KW-0991">Intellectual disability</keyword>
<keyword id="KW-0472">Membrane</keyword>
<keyword id="KW-0597">Phosphoprotein</keyword>
<keyword id="KW-1267">Proteomics identification</keyword>
<keyword id="KW-1185">Reference proteome</keyword>
<keyword id="KW-0762">Sugar transport</keyword>
<keyword id="KW-0812">Transmembrane</keyword>
<keyword id="KW-1133">Transmembrane helix</keyword>
<keyword id="KW-0813">Transport</keyword>
<comment type="function">
    <text evidence="2 3 5 6 14 18 37 38 40">Facilitative glucose transporter, which is responsible for constitutive or basal glucose uptake (PubMed:10227690, PubMed:10954735, PubMed:18245775, PubMed:19449892, PubMed:25982116, PubMed:27078104, PubMed:32860739). Has a very broad substrate specificity; can transport a wide range of aldoses including both pentoses and hexoses (PubMed:18245775, PubMed:19449892). Most important energy carrier of the brain: present at the blood-brain barrier and assures the energy-independent, facilitative transport of glucose into the brain (PubMed:10227690). In association with BSG and NXNL1, promotes retinal cone survival by increasing glucose uptake into photoreceptors (By similarity). Required for mesendoderm differentiation (By similarity).</text>
</comment>
<comment type="catalytic activity">
    <reaction evidence="5 6 37 38 40">
        <text>D-glucose(out) = D-glucose(in)</text>
        <dbReference type="Rhea" id="RHEA:60376"/>
        <dbReference type="ChEBI" id="CHEBI:4167"/>
    </reaction>
</comment>
<comment type="activity regulation">
    <text evidence="37 38 41">The uptake of glucose is inhibited by cytochalasin B and Phe-amide core-scaffold inhibitors GLUT-i1 and GLUT-i2 (PubMed:27078104). These inhibitors bind in the central cavity of the inward-open state and overlap the glucose-binding site (PubMed:27078104). Glucose uptake is increased in response to phorbol ester 12-O-tetradecanoylphorbol-13-acetate (TPA) treatment: TPA-induced glucose uptake requires phosphorylation at Ser-226 (PubMed:25982116). Interacts with SMIM43; the interaction may promote SLC2A1-mediated glucose transport to meet the energy needs of mesendoderm differentiation (PubMed:35810171).</text>
</comment>
<comment type="biophysicochemical properties">
    <kinetics>
        <KM evidence="37">25.6 mM for glucose</KM>
        <KM evidence="37">50.1 mM for glucose (in presence of TPA)</KM>
        <KM evidence="6">2.5 mM for glucose</KM>
    </kinetics>
</comment>
<comment type="pathway">
    <text>Carbohydrate degradation.</text>
</comment>
<comment type="subunit">
    <text evidence="1 15 32 34 36">Interacts with GIPC (via PDZ domain) (By similarity). Found in a complex with ADD2, DMTN and SLC2A1. Interacts (via C-terminus cytoplasmic region) with DMTN isoform 2 (PubMed:18347014). Interacts with SNX27; the interaction is required when endocytosed to prevent degradation in lysosomes and promote recycling to the plasma membrane (PubMed:23563491). Interacts with STOM (PubMed:23219802). Interacts with SGTA (via Gln-rich region) (By similarity). Interacts with isoform 1 of BSG (PubMed:25957687).</text>
</comment>
<comment type="interaction">
    <interactant intactId="EBI-717153">
        <id>P11166</id>
    </interactant>
    <interactant intactId="EBI-625022">
        <id>O43889-2</id>
        <label>CREB3</label>
    </interactant>
    <organismsDiffer>false</organismsDiffer>
    <experiments>3</experiments>
</comment>
<comment type="interaction">
    <interactant intactId="EBI-717153">
        <id>P11166</id>
    </interactant>
    <interactant intactId="EBI-717153">
        <id>P11166</id>
        <label>SLC2A1</label>
    </interactant>
    <organismsDiffer>false</organismsDiffer>
    <experiments>3</experiments>
</comment>
<comment type="subcellular location">
    <subcellularLocation>
        <location evidence="14 18 32 35 37 39">Cell membrane</location>
        <topology evidence="4">Multi-pass membrane protein</topology>
    </subcellularLocation>
    <subcellularLocation>
        <location evidence="13">Melanosome</location>
    </subcellularLocation>
    <subcellularLocation>
        <location evidence="2">Photoreceptor inner segment</location>
    </subcellularLocation>
    <text evidence="13 14 18 32 35 37">Localizes primarily at the cell surface (PubMed:18245775, PubMed:19449892, PubMed:23219802, PubMed:24847886, PubMed:25982116). Identified by mass spectrometry in melanosome fractions from stage I to stage IV (PubMed:17081065).</text>
</comment>
<comment type="tissue specificity">
    <text evidence="32">Detected in erythrocytes (at protein level). Expressed at variable levels in many human tissues.</text>
</comment>
<comment type="PTM">
    <text evidence="37">Phosphorylation at Ser-226 by PKC promotes glucose uptake by increasing cell membrane localization.</text>
</comment>
<comment type="disease" evidence="5 7 8 9 10 12 21 22 23 24 35 37 39">
    <disease id="DI-01209">
        <name>GLUT1 deficiency syndrome 1</name>
        <acronym>GLUT1DS1</acronym>
        <description>A neurologic disorder showing wide phenotypic variability. The most severe 'classic' phenotype comprises infantile-onset epileptic encephalopathy associated with delayed development, acquired microcephaly, motor incoordination, and spasticity. Onset of seizures, usually characterized by apneic episodes, staring spells, and episodic eye movements, occurs within the first 4 months of life. Other paroxysmal findings include intermittent ataxia, confusion, lethargy, sleep disturbance, and headache. Varying degrees of cognitive impairment can occur, ranging from learning disabilities to severe intellectual disability.</description>
        <dbReference type="MIM" id="606777"/>
    </disease>
    <text>The disease is caused by variants affecting the gene represented in this entry.</text>
</comment>
<comment type="disease" evidence="11 16 19 20 22 24 25 26 27">
    <disease id="DI-00421">
        <name>GLUT1 deficiency syndrome 2</name>
        <acronym>GLUT1DS2</acronym>
        <description>A clinically variable disorder characterized primarily by onset in childhood of paroxysmal exercise-induced dyskinesia. The dyskinesia involves transient abnormal involuntary movements, such as dystonia and choreoathetosis, induced by exercise or exertion, and affecting the exercised limbs. Some patients may also have epilepsy, most commonly childhood absence epilepsy. Mild intellectual disability may also occur. In some patients involuntary exertion-induced dystonic, choreoathetotic, and ballistic movements may be associated with macrocytic hemolytic anemia.</description>
        <dbReference type="MIM" id="612126"/>
    </disease>
    <text>The disease is caused by variants affecting the gene represented in this entry.</text>
</comment>
<comment type="disease" evidence="20 30 33 37">
    <disease id="DI-03549">
        <name>Epilepsy, idiopathic generalized 12</name>
        <acronym>EIG12</acronym>
        <description>A disorder characterized by recurring generalized seizures in the absence of detectable brain lesions and/or metabolic abnormalities. Generalized seizures arise diffusely and simultaneously from both hemispheres of the brain. Seizure types include juvenile myoclonic seizures, absence seizures, and generalized tonic-clonic seizures. In some EIG12 patients seizures may remit with age.</description>
        <dbReference type="MIM" id="614847"/>
    </disease>
    <text>Disease susceptibility is associated with variants affecting the gene represented in this entry.</text>
</comment>
<comment type="disease" evidence="29">
    <disease id="DI-03550">
        <name>Dystonia 9</name>
        <acronym>DYT9</acronym>
        <description>An autosomal dominant neurologic disorder characterized by childhood onset of paroxysmal choreoathetosis and progressive spastic paraplegia. Most patients show some degree of cognitive impairment. Other variable features may include seizures, migraine headaches, and ataxia.</description>
        <dbReference type="MIM" id="601042"/>
    </disease>
    <text>The disease is caused by variants affecting the gene represented in this entry.</text>
</comment>
<comment type="disease" evidence="28 31">
    <disease id="DI-04611">
        <name>Stomatin-deficient cryohydrocytosis with neurologic defects</name>
        <acronym>SDCHCN</acronym>
        <description>A rare form of stomatocytosis characterized by episodic hemolytic anemia, cold-induced red cells cation leak, erratic hyperkalemia, neonatal hyperbilirubinemia, hepatosplenomegaly, cataracts, seizures, intellectual disability, and movement disorder.</description>
        <dbReference type="MIM" id="608885"/>
    </disease>
    <text>The disease is caused by variants affecting the gene represented in this entry.</text>
</comment>
<comment type="similarity">
    <text evidence="47">Belongs to the major facilitator superfamily. Sugar transporter (TC 2.A.1.1) family. Glucose transporter subfamily.</text>
</comment>
<comment type="online information" name="Wikipedia">
    <link uri="https://en.wikipedia.org/wiki/GLUT1"/>
    <text>GLUT1 entry</text>
</comment>
<dbReference type="EMBL" id="K03195">
    <property type="protein sequence ID" value="AAA52571.1"/>
    <property type="molecule type" value="mRNA"/>
</dbReference>
<dbReference type="EMBL" id="AK292791">
    <property type="protein sequence ID" value="BAF85480.1"/>
    <property type="molecule type" value="mRNA"/>
</dbReference>
<dbReference type="EMBL" id="AK312403">
    <property type="protein sequence ID" value="BAG35317.1"/>
    <property type="molecule type" value="mRNA"/>
</dbReference>
<dbReference type="EMBL" id="CH471059">
    <property type="protein sequence ID" value="EAX07124.1"/>
    <property type="molecule type" value="Genomic_DNA"/>
</dbReference>
<dbReference type="EMBL" id="BC118590">
    <property type="protein sequence ID" value="AAI18591.1"/>
    <property type="molecule type" value="mRNA"/>
</dbReference>
<dbReference type="EMBL" id="BC121804">
    <property type="protein sequence ID" value="AAI21805.1"/>
    <property type="molecule type" value="mRNA"/>
</dbReference>
<dbReference type="EMBL" id="M20653">
    <property type="protein sequence ID" value="AAB61084.1"/>
    <property type="molecule type" value="Genomic_DNA"/>
</dbReference>
<dbReference type="EMBL" id="AF070544">
    <property type="protein sequence ID" value="AAC28635.1"/>
    <property type="molecule type" value="mRNA"/>
</dbReference>
<dbReference type="EMBL" id="AY034633">
    <property type="protein sequence ID" value="AAK56795.1"/>
    <property type="molecule type" value="mRNA"/>
</dbReference>
<dbReference type="CCDS" id="CCDS477.1"/>
<dbReference type="PIR" id="A27217">
    <property type="entry name" value="A27217"/>
</dbReference>
<dbReference type="RefSeq" id="NP_006507.2">
    <property type="nucleotide sequence ID" value="NM_006516.4"/>
</dbReference>
<dbReference type="PDB" id="4PYP">
    <property type="method" value="X-ray"/>
    <property type="resolution" value="3.17 A"/>
    <property type="chains" value="A=1-492"/>
</dbReference>
<dbReference type="PDB" id="5EQG">
    <property type="method" value="X-ray"/>
    <property type="resolution" value="2.90 A"/>
    <property type="chains" value="A=1-492"/>
</dbReference>
<dbReference type="PDB" id="5EQH">
    <property type="method" value="X-ray"/>
    <property type="resolution" value="2.99 A"/>
    <property type="chains" value="A=1-492"/>
</dbReference>
<dbReference type="PDB" id="5EQI">
    <property type="method" value="X-ray"/>
    <property type="resolution" value="3.00 A"/>
    <property type="chains" value="A=1-492"/>
</dbReference>
<dbReference type="PDB" id="6THA">
    <property type="method" value="X-ray"/>
    <property type="resolution" value="2.40 A"/>
    <property type="chains" value="A=1-492"/>
</dbReference>
<dbReference type="PDBsum" id="4PYP"/>
<dbReference type="PDBsum" id="5EQG"/>
<dbReference type="PDBsum" id="5EQH"/>
<dbReference type="PDBsum" id="5EQI"/>
<dbReference type="PDBsum" id="6THA"/>
<dbReference type="SMR" id="P11166"/>
<dbReference type="BioGRID" id="112404">
    <property type="interactions" value="275"/>
</dbReference>
<dbReference type="ComplexPortal" id="CPX-3111">
    <property type="entry name" value="Glucose transporter complex 1"/>
</dbReference>
<dbReference type="CORUM" id="P11166"/>
<dbReference type="DIP" id="DIP-23N"/>
<dbReference type="FunCoup" id="P11166">
    <property type="interactions" value="1183"/>
</dbReference>
<dbReference type="IntAct" id="P11166">
    <property type="interactions" value="164"/>
</dbReference>
<dbReference type="MINT" id="P11166"/>
<dbReference type="STRING" id="9606.ENSP00000416293"/>
<dbReference type="BindingDB" id="P11166"/>
<dbReference type="ChEMBL" id="CHEMBL2535"/>
<dbReference type="DrugBank" id="DB08831">
    <property type="generic name" value="2-deoxyglucose"/>
</dbReference>
<dbReference type="DrugBank" id="DB00126">
    <property type="generic name" value="Ascorbic acid"/>
</dbReference>
<dbReference type="DrugBank" id="DB00237">
    <property type="generic name" value="Butabarbital"/>
</dbReference>
<dbReference type="DrugBank" id="DB11059">
    <property type="generic name" value="Carboxymethylcellulose"/>
</dbReference>
<dbReference type="DrugBank" id="DB01914">
    <property type="generic name" value="D-glucose"/>
</dbReference>
<dbReference type="DrugBank" id="DB08830">
    <property type="generic name" value="Dehydroascorbic acid"/>
</dbReference>
<dbReference type="DrugBank" id="DB09341">
    <property type="generic name" value="Dextrose, unspecified form"/>
</dbReference>
<dbReference type="DrugBank" id="DB00292">
    <property type="generic name" value="Etomidate"/>
</dbReference>
<dbReference type="DrugBank" id="DB09502">
    <property type="generic name" value="Fludeoxyglucose (18F)"/>
</dbReference>
<dbReference type="DrugBank" id="DB01296">
    <property type="generic name" value="Glucosamine"/>
</dbReference>
<dbReference type="DrugBank" id="DB02709">
    <property type="generic name" value="Resveratrol"/>
</dbReference>
<dbReference type="DrugCentral" id="P11166"/>
<dbReference type="GuidetoPHARMACOLOGY" id="875"/>
<dbReference type="TCDB" id="2.A.1.1.28">
    <property type="family name" value="the major facilitator superfamily (mfs)"/>
</dbReference>
<dbReference type="GlyConnect" id="573">
    <property type="glycosylation" value="13 N-Linked glycans, 1 O-GlcNAc glycan (1 site)"/>
</dbReference>
<dbReference type="GlyCosmos" id="P11166">
    <property type="glycosylation" value="2 sites, 3 glycans"/>
</dbReference>
<dbReference type="GlyGen" id="P11166">
    <property type="glycosylation" value="3 sites, 8 N-linked glycans (2 sites), 1 O-linked glycan (1 site)"/>
</dbReference>
<dbReference type="iPTMnet" id="P11166"/>
<dbReference type="MetOSite" id="P11166"/>
<dbReference type="PhosphoSitePlus" id="P11166"/>
<dbReference type="SwissPalm" id="P11166"/>
<dbReference type="BioMuta" id="SLC2A1"/>
<dbReference type="DMDM" id="115502394"/>
<dbReference type="CPTAC" id="CPTAC-2736"/>
<dbReference type="CPTAC" id="CPTAC-274"/>
<dbReference type="CPTAC" id="CPTAC-275"/>
<dbReference type="jPOST" id="P11166"/>
<dbReference type="MassIVE" id="P11166"/>
<dbReference type="PaxDb" id="9606-ENSP00000416293"/>
<dbReference type="PeptideAtlas" id="P11166"/>
<dbReference type="ProteomicsDB" id="52703"/>
<dbReference type="Pumba" id="P11166"/>
<dbReference type="ABCD" id="P11166">
    <property type="antibodies" value="1 sequenced antibody"/>
</dbReference>
<dbReference type="Antibodypedia" id="3451">
    <property type="antibodies" value="773 antibodies from 47 providers"/>
</dbReference>
<dbReference type="DNASU" id="6513"/>
<dbReference type="Ensembl" id="ENST00000426263.10">
    <property type="protein sequence ID" value="ENSP00000416293.2"/>
    <property type="gene ID" value="ENSG00000117394.24"/>
</dbReference>
<dbReference type="GeneID" id="6513"/>
<dbReference type="KEGG" id="hsa:6513"/>
<dbReference type="MANE-Select" id="ENST00000426263.10">
    <property type="protein sequence ID" value="ENSP00000416293.2"/>
    <property type="RefSeq nucleotide sequence ID" value="NM_006516.4"/>
    <property type="RefSeq protein sequence ID" value="NP_006507.2"/>
</dbReference>
<dbReference type="UCSC" id="uc001cik.3">
    <property type="organism name" value="human"/>
</dbReference>
<dbReference type="AGR" id="HGNC:11005"/>
<dbReference type="CTD" id="6513"/>
<dbReference type="DisGeNET" id="6513"/>
<dbReference type="GeneCards" id="SLC2A1"/>
<dbReference type="GeneReviews" id="SLC2A1"/>
<dbReference type="HGNC" id="HGNC:11005">
    <property type="gene designation" value="SLC2A1"/>
</dbReference>
<dbReference type="HPA" id="ENSG00000117394">
    <property type="expression patterns" value="Tissue enhanced (placenta, skin)"/>
</dbReference>
<dbReference type="MalaCards" id="SLC2A1"/>
<dbReference type="MIM" id="138140">
    <property type="type" value="gene"/>
</dbReference>
<dbReference type="MIM" id="601042">
    <property type="type" value="phenotype"/>
</dbReference>
<dbReference type="MIM" id="606777">
    <property type="type" value="phenotype"/>
</dbReference>
<dbReference type="MIM" id="608885">
    <property type="type" value="phenotype"/>
</dbReference>
<dbReference type="MIM" id="612126">
    <property type="type" value="phenotype"/>
</dbReference>
<dbReference type="MIM" id="614847">
    <property type="type" value="phenotype"/>
</dbReference>
<dbReference type="neXtProt" id="NX_P11166"/>
<dbReference type="OpenTargets" id="ENSG00000117394"/>
<dbReference type="Orphanet" id="71277">
    <property type="disease" value="Classic glucose transporter type 1 deficiency syndrome"/>
</dbReference>
<dbReference type="Orphanet" id="86911">
    <property type="disease" value="Epilepsy with myoclonic absences"/>
</dbReference>
<dbReference type="Orphanet" id="1942">
    <property type="disease" value="Epilepsy with myoclonic-atonic seizures"/>
</dbReference>
<dbReference type="Orphanet" id="168577">
    <property type="disease" value="Hereditary cryohydrocytosis with reduced stomatin"/>
</dbReference>
<dbReference type="Orphanet" id="53583">
    <property type="disease" value="Paroxysmal dystonic choreathetosis with episodic ataxia and spasticity"/>
</dbReference>
<dbReference type="Orphanet" id="98811">
    <property type="disease" value="Paroxysmal exertion-induced dyskinesia"/>
</dbReference>
<dbReference type="PharmGKB" id="PA35875"/>
<dbReference type="VEuPathDB" id="HostDB:ENSG00000117394"/>
<dbReference type="eggNOG" id="KOG0569">
    <property type="taxonomic scope" value="Eukaryota"/>
</dbReference>
<dbReference type="GeneTree" id="ENSGT00940000156792"/>
<dbReference type="HOGENOM" id="CLU_001265_30_5_1"/>
<dbReference type="InParanoid" id="P11166"/>
<dbReference type="OMA" id="WAITASF"/>
<dbReference type="OrthoDB" id="4540492at2759"/>
<dbReference type="PAN-GO" id="P11166">
    <property type="GO annotations" value="7 GO annotations based on evolutionary models"/>
</dbReference>
<dbReference type="PhylomeDB" id="P11166"/>
<dbReference type="TreeFam" id="TF313762"/>
<dbReference type="BioCyc" id="MetaCyc:ENSG00000117394-MONOMER"/>
<dbReference type="PathwayCommons" id="P11166"/>
<dbReference type="Reactome" id="R-HSA-189200">
    <property type="pathway name" value="Cellular hexose transport"/>
</dbReference>
<dbReference type="Reactome" id="R-HSA-196836">
    <property type="pathway name" value="Vitamin C (ascorbate) metabolism"/>
</dbReference>
<dbReference type="Reactome" id="R-HSA-422356">
    <property type="pathway name" value="Regulation of insulin secretion"/>
</dbReference>
<dbReference type="Reactome" id="R-HSA-5619043">
    <property type="pathway name" value="Defective SLC2A1 causes GLUT1 deficiency syndrome 1 (GLUT1DS1)"/>
</dbReference>
<dbReference type="Reactome" id="R-HSA-5653890">
    <property type="pathway name" value="Lactose synthesis"/>
</dbReference>
<dbReference type="SignaLink" id="P11166"/>
<dbReference type="SIGNOR" id="P11166"/>
<dbReference type="BioGRID-ORCS" id="6513">
    <property type="hits" value="209 hits in 1171 CRISPR screens"/>
</dbReference>
<dbReference type="CD-CODE" id="FB4E32DD">
    <property type="entry name" value="Presynaptic clusters and postsynaptic densities"/>
</dbReference>
<dbReference type="ChiTaRS" id="SLC2A1">
    <property type="organism name" value="human"/>
</dbReference>
<dbReference type="EvolutionaryTrace" id="P11166"/>
<dbReference type="GeneWiki" id="GLUT1"/>
<dbReference type="GenomeRNAi" id="6513"/>
<dbReference type="Pharos" id="P11166">
    <property type="development level" value="Tchem"/>
</dbReference>
<dbReference type="PRO" id="PR:P11166"/>
<dbReference type="Proteomes" id="UP000005640">
    <property type="component" value="Chromosome 1"/>
</dbReference>
<dbReference type="RNAct" id="P11166">
    <property type="molecule type" value="protein"/>
</dbReference>
<dbReference type="Bgee" id="ENSG00000117394">
    <property type="expression patterns" value="Expressed in tibial nerve and 164 other cell types or tissues"/>
</dbReference>
<dbReference type="ExpressionAtlas" id="P11166">
    <property type="expression patterns" value="baseline and differential"/>
</dbReference>
<dbReference type="GO" id="GO:0016324">
    <property type="term" value="C:apical plasma membrane"/>
    <property type="evidence" value="ECO:0000314"/>
    <property type="project" value="ARUK-UCL"/>
</dbReference>
<dbReference type="GO" id="GO:0016323">
    <property type="term" value="C:basolateral plasma membrane"/>
    <property type="evidence" value="ECO:0000314"/>
    <property type="project" value="ARUK-UCL"/>
</dbReference>
<dbReference type="GO" id="GO:0072562">
    <property type="term" value="C:blood microparticle"/>
    <property type="evidence" value="ECO:0007005"/>
    <property type="project" value="UniProtKB"/>
</dbReference>
<dbReference type="GO" id="GO:0005901">
    <property type="term" value="C:caveola"/>
    <property type="evidence" value="ECO:0007669"/>
    <property type="project" value="Ensembl"/>
</dbReference>
<dbReference type="GO" id="GO:0030864">
    <property type="term" value="C:cortical actin cytoskeleton"/>
    <property type="evidence" value="ECO:0000314"/>
    <property type="project" value="UniProtKB"/>
</dbReference>
<dbReference type="GO" id="GO:0005829">
    <property type="term" value="C:cytosol"/>
    <property type="evidence" value="ECO:0007669"/>
    <property type="project" value="Ensembl"/>
</dbReference>
<dbReference type="GO" id="GO:0070062">
    <property type="term" value="C:extracellular exosome"/>
    <property type="evidence" value="ECO:0007005"/>
    <property type="project" value="UniProtKB"/>
</dbReference>
<dbReference type="GO" id="GO:0001674">
    <property type="term" value="C:female germ cell nucleus"/>
    <property type="evidence" value="ECO:0007669"/>
    <property type="project" value="Ensembl"/>
</dbReference>
<dbReference type="GO" id="GO:0001939">
    <property type="term" value="C:female pronucleus"/>
    <property type="evidence" value="ECO:0007669"/>
    <property type="project" value="Ensembl"/>
</dbReference>
<dbReference type="GO" id="GO:1990350">
    <property type="term" value="C:glucose transporter complex"/>
    <property type="evidence" value="ECO:0000353"/>
    <property type="project" value="ComplexPortal"/>
</dbReference>
<dbReference type="GO" id="GO:0000139">
    <property type="term" value="C:Golgi membrane"/>
    <property type="evidence" value="ECO:0000304"/>
    <property type="project" value="Reactome"/>
</dbReference>
<dbReference type="GO" id="GO:0014704">
    <property type="term" value="C:intercalated disc"/>
    <property type="evidence" value="ECO:0007669"/>
    <property type="project" value="Ensembl"/>
</dbReference>
<dbReference type="GO" id="GO:0042470">
    <property type="term" value="C:melanosome"/>
    <property type="evidence" value="ECO:0007669"/>
    <property type="project" value="UniProtKB-SubCell"/>
</dbReference>
<dbReference type="GO" id="GO:0016020">
    <property type="term" value="C:membrane"/>
    <property type="evidence" value="ECO:0000314"/>
    <property type="project" value="ARUK-UCL"/>
</dbReference>
<dbReference type="GO" id="GO:0030496">
    <property type="term" value="C:midbody"/>
    <property type="evidence" value="ECO:0000314"/>
    <property type="project" value="UniProtKB"/>
</dbReference>
<dbReference type="GO" id="GO:0001917">
    <property type="term" value="C:photoreceptor inner segment"/>
    <property type="evidence" value="ECO:0007669"/>
    <property type="project" value="UniProtKB-SubCell"/>
</dbReference>
<dbReference type="GO" id="GO:0005886">
    <property type="term" value="C:plasma membrane"/>
    <property type="evidence" value="ECO:0000314"/>
    <property type="project" value="UniProtKB"/>
</dbReference>
<dbReference type="GO" id="GO:0098793">
    <property type="term" value="C:presynapse"/>
    <property type="evidence" value="ECO:0007669"/>
    <property type="project" value="Ensembl"/>
</dbReference>
<dbReference type="GO" id="GO:0042383">
    <property type="term" value="C:sarcolemma"/>
    <property type="evidence" value="ECO:0000250"/>
    <property type="project" value="ARUK-UCL"/>
</dbReference>
<dbReference type="GO" id="GO:0030018">
    <property type="term" value="C:Z disc"/>
    <property type="evidence" value="ECO:0007669"/>
    <property type="project" value="Ensembl"/>
</dbReference>
<dbReference type="GO" id="GO:0055056">
    <property type="term" value="F:D-glucose transmembrane transporter activity"/>
    <property type="evidence" value="ECO:0000314"/>
    <property type="project" value="UniProtKB"/>
</dbReference>
<dbReference type="GO" id="GO:0033300">
    <property type="term" value="F:dehydroascorbic acid transmembrane transporter activity"/>
    <property type="evidence" value="ECO:0000269"/>
    <property type="project" value="Reactome"/>
</dbReference>
<dbReference type="GO" id="GO:0015150">
    <property type="term" value="F:fucose transmembrane transporter activity"/>
    <property type="evidence" value="ECO:0007669"/>
    <property type="project" value="Ensembl"/>
</dbReference>
<dbReference type="GO" id="GO:0042802">
    <property type="term" value="F:identical protein binding"/>
    <property type="evidence" value="ECO:0000353"/>
    <property type="project" value="IntAct"/>
</dbReference>
<dbReference type="GO" id="GO:0019900">
    <property type="term" value="F:kinase binding"/>
    <property type="evidence" value="ECO:0007669"/>
    <property type="project" value="Ensembl"/>
</dbReference>
<dbReference type="GO" id="GO:0005324">
    <property type="term" value="F:long-chain fatty acid transmembrane transporter activity"/>
    <property type="evidence" value="ECO:0000315"/>
    <property type="project" value="ARUK-UCL"/>
</dbReference>
<dbReference type="GO" id="GO:0042910">
    <property type="term" value="F:xenobiotic transmembrane transporter activity"/>
    <property type="evidence" value="ECO:0007669"/>
    <property type="project" value="Ensembl"/>
</dbReference>
<dbReference type="GO" id="GO:0071474">
    <property type="term" value="P:cellular hyperosmotic response"/>
    <property type="evidence" value="ECO:0007669"/>
    <property type="project" value="Ensembl"/>
</dbReference>
<dbReference type="GO" id="GO:0042149">
    <property type="term" value="P:cellular response to glucose starvation"/>
    <property type="evidence" value="ECO:0007669"/>
    <property type="project" value="Ensembl"/>
</dbReference>
<dbReference type="GO" id="GO:0071260">
    <property type="term" value="P:cellular response to mechanical stimulus"/>
    <property type="evidence" value="ECO:0007669"/>
    <property type="project" value="Ensembl"/>
</dbReference>
<dbReference type="GO" id="GO:0007417">
    <property type="term" value="P:central nervous system development"/>
    <property type="evidence" value="ECO:0000315"/>
    <property type="project" value="ARUK-UCL"/>
</dbReference>
<dbReference type="GO" id="GO:0021987">
    <property type="term" value="P:cerebral cortex development"/>
    <property type="evidence" value="ECO:0007669"/>
    <property type="project" value="Ensembl"/>
</dbReference>
<dbReference type="GO" id="GO:0046323">
    <property type="term" value="P:D-glucose import"/>
    <property type="evidence" value="ECO:0000318"/>
    <property type="project" value="GO_Central"/>
</dbReference>
<dbReference type="GO" id="GO:0098708">
    <property type="term" value="P:D-glucose import across plasma membrane"/>
    <property type="evidence" value="ECO:0000315"/>
    <property type="project" value="ARUK-UCL"/>
</dbReference>
<dbReference type="GO" id="GO:1904659">
    <property type="term" value="P:D-glucose transmembrane transport"/>
    <property type="evidence" value="ECO:0000314"/>
    <property type="project" value="UniProtKB"/>
</dbReference>
<dbReference type="GO" id="GO:0070837">
    <property type="term" value="P:dehydroascorbic acid transport"/>
    <property type="evidence" value="ECO:0000318"/>
    <property type="project" value="GO_Central"/>
</dbReference>
<dbReference type="GO" id="GO:0007565">
    <property type="term" value="P:female pregnancy"/>
    <property type="evidence" value="ECO:0007669"/>
    <property type="project" value="Ensembl"/>
</dbReference>
<dbReference type="GO" id="GO:0019852">
    <property type="term" value="P:L-ascorbic acid metabolic process"/>
    <property type="evidence" value="ECO:0000304"/>
    <property type="project" value="Reactome"/>
</dbReference>
<dbReference type="GO" id="GO:0015911">
    <property type="term" value="P:long-chain fatty acid import across plasma membrane"/>
    <property type="evidence" value="ECO:0000315"/>
    <property type="project" value="ARUK-UCL"/>
</dbReference>
<dbReference type="GO" id="GO:0045494">
    <property type="term" value="P:photoreceptor cell maintenance"/>
    <property type="evidence" value="ECO:0000314"/>
    <property type="project" value="UniProt"/>
</dbReference>
<dbReference type="GO" id="GO:0065003">
    <property type="term" value="P:protein-containing complex assembly"/>
    <property type="evidence" value="ECO:0000314"/>
    <property type="project" value="UniProtKB"/>
</dbReference>
<dbReference type="GO" id="GO:0001666">
    <property type="term" value="P:response to hypoxia"/>
    <property type="evidence" value="ECO:0007669"/>
    <property type="project" value="Ensembl"/>
</dbReference>
<dbReference type="GO" id="GO:0032868">
    <property type="term" value="P:response to insulin"/>
    <property type="evidence" value="ECO:0000318"/>
    <property type="project" value="GO_Central"/>
</dbReference>
<dbReference type="GO" id="GO:1904016">
    <property type="term" value="P:response to Thyroglobulin triiodothyronine"/>
    <property type="evidence" value="ECO:0007669"/>
    <property type="project" value="Ensembl"/>
</dbReference>
<dbReference type="GO" id="GO:0150104">
    <property type="term" value="P:transport across blood-brain barrier"/>
    <property type="evidence" value="ECO:0000315"/>
    <property type="project" value="ARUK-UCL"/>
</dbReference>
<dbReference type="CDD" id="cd17431">
    <property type="entry name" value="MFS_GLUT_Class1"/>
    <property type="match status" value="1"/>
</dbReference>
<dbReference type="DisProt" id="DP02855"/>
<dbReference type="FunFam" id="1.20.1250.20:FF:000040">
    <property type="entry name" value="Solute carrier family 2, facilitated glucose transporter member 1"/>
    <property type="match status" value="1"/>
</dbReference>
<dbReference type="Gene3D" id="1.20.1250.20">
    <property type="entry name" value="MFS general substrate transporter like domains"/>
    <property type="match status" value="1"/>
</dbReference>
<dbReference type="InterPro" id="IPR002439">
    <property type="entry name" value="Glu_transpt_1"/>
</dbReference>
<dbReference type="InterPro" id="IPR045263">
    <property type="entry name" value="GLUT"/>
</dbReference>
<dbReference type="InterPro" id="IPR020846">
    <property type="entry name" value="MFS_dom"/>
</dbReference>
<dbReference type="InterPro" id="IPR005828">
    <property type="entry name" value="MFS_sugar_transport-like"/>
</dbReference>
<dbReference type="InterPro" id="IPR036259">
    <property type="entry name" value="MFS_trans_sf"/>
</dbReference>
<dbReference type="InterPro" id="IPR003663">
    <property type="entry name" value="Sugar/inositol_transpt"/>
</dbReference>
<dbReference type="InterPro" id="IPR005829">
    <property type="entry name" value="Sugar_transporter_CS"/>
</dbReference>
<dbReference type="NCBIfam" id="TIGR00879">
    <property type="entry name" value="SP"/>
    <property type="match status" value="1"/>
</dbReference>
<dbReference type="PANTHER" id="PTHR23503">
    <property type="entry name" value="SOLUTE CARRIER FAMILY 2"/>
    <property type="match status" value="1"/>
</dbReference>
<dbReference type="PANTHER" id="PTHR23503:SF51">
    <property type="entry name" value="SOLUTE CARRIER FAMILY 2, FACILITATED GLUCOSE TRANSPORTER MEMBER 1"/>
    <property type="match status" value="1"/>
</dbReference>
<dbReference type="Pfam" id="PF00083">
    <property type="entry name" value="Sugar_tr"/>
    <property type="match status" value="1"/>
</dbReference>
<dbReference type="PRINTS" id="PR01190">
    <property type="entry name" value="GLUCTRSPORT1"/>
</dbReference>
<dbReference type="PRINTS" id="PR00171">
    <property type="entry name" value="SUGRTRNSPORT"/>
</dbReference>
<dbReference type="SUPFAM" id="SSF103473">
    <property type="entry name" value="MFS general substrate transporter"/>
    <property type="match status" value="1"/>
</dbReference>
<dbReference type="PROSITE" id="PS50850">
    <property type="entry name" value="MFS"/>
    <property type="match status" value="1"/>
</dbReference>
<dbReference type="PROSITE" id="PS00216">
    <property type="entry name" value="SUGAR_TRANSPORT_1"/>
    <property type="match status" value="1"/>
</dbReference>
<dbReference type="PROSITE" id="PS00217">
    <property type="entry name" value="SUGAR_TRANSPORT_2"/>
    <property type="match status" value="1"/>
</dbReference>
<protein>
    <recommendedName>
        <fullName evidence="47">Solute carrier family 2, facilitated glucose transporter member 1</fullName>
    </recommendedName>
    <alternativeName>
        <fullName evidence="44">Glucose transporter type 1, erythrocyte/brain</fullName>
        <shortName evidence="44">GLUT-1</shortName>
    </alternativeName>
    <alternativeName>
        <fullName evidence="45 46">HepG2 glucose transporter</fullName>
    </alternativeName>
</protein>